<protein>
    <recommendedName>
        <fullName>Pogo transposable element with ZNF domain</fullName>
    </recommendedName>
    <alternativeName>
        <fullName>Suppressor of hairy wing homolog 5</fullName>
    </alternativeName>
    <alternativeName>
        <fullName>Zinc finger protein 280E</fullName>
    </alternativeName>
    <alternativeName>
        <fullName>Zinc finger protein 635</fullName>
    </alternativeName>
</protein>
<dbReference type="EMBL" id="BX537838">
    <property type="protein sequence ID" value="CAD97850.1"/>
    <property type="molecule type" value="mRNA"/>
</dbReference>
<dbReference type="EMBL" id="AK300307">
    <property type="protein sequence ID" value="BAG62060.1"/>
    <property type="molecule type" value="mRNA"/>
</dbReference>
<dbReference type="EMBL" id="AK302501">
    <property type="protein sequence ID" value="BAG63781.1"/>
    <property type="molecule type" value="mRNA"/>
</dbReference>
<dbReference type="EMBL" id="AL589764">
    <property type="status" value="NOT_ANNOTATED_CDS"/>
    <property type="molecule type" value="Genomic_DNA"/>
</dbReference>
<dbReference type="EMBL" id="CH471121">
    <property type="protein sequence ID" value="EAW53440.1"/>
    <property type="molecule type" value="Genomic_DNA"/>
</dbReference>
<dbReference type="EMBL" id="AB037911">
    <property type="protein sequence ID" value="BAB87117.1"/>
    <property type="molecule type" value="mRNA"/>
</dbReference>
<dbReference type="EMBL" id="AB075477">
    <property type="protein sequence ID" value="BAE45744.1"/>
    <property type="status" value="ALT_INIT"/>
    <property type="molecule type" value="mRNA"/>
</dbReference>
<dbReference type="EMBL" id="AJ242979">
    <property type="protein sequence ID" value="CAB45136.1"/>
    <property type="molecule type" value="mRNA"/>
</dbReference>
<dbReference type="EMBL" id="BC057773">
    <property type="protein sequence ID" value="AAH57773.1"/>
    <property type="molecule type" value="mRNA"/>
</dbReference>
<dbReference type="EMBL" id="AB007930">
    <property type="protein sequence ID" value="BAA32306.1"/>
    <property type="molecule type" value="mRNA"/>
</dbReference>
<dbReference type="CCDS" id="CCDS44222.2">
    <molecule id="Q7Z3K3-5"/>
</dbReference>
<dbReference type="CCDS" id="CCDS53365.1">
    <molecule id="Q7Z3K3-7"/>
</dbReference>
<dbReference type="CCDS" id="CCDS53366.1">
    <molecule id="Q7Z3K3-6"/>
</dbReference>
<dbReference type="CCDS" id="CCDS997.1">
    <molecule id="Q7Z3K3-1"/>
</dbReference>
<dbReference type="CCDS" id="CCDS998.1">
    <molecule id="Q7Z3K3-2"/>
</dbReference>
<dbReference type="PIR" id="T00075">
    <property type="entry name" value="T00075"/>
</dbReference>
<dbReference type="RefSeq" id="NP_001181866.1">
    <molecule id="Q7Z3K3-6"/>
    <property type="nucleotide sequence ID" value="NM_001194937.2"/>
</dbReference>
<dbReference type="RefSeq" id="NP_001181867.1">
    <molecule id="Q7Z3K3-7"/>
    <property type="nucleotide sequence ID" value="NM_001194938.2"/>
</dbReference>
<dbReference type="RefSeq" id="NP_055915.2">
    <molecule id="Q7Z3K3-1"/>
    <property type="nucleotide sequence ID" value="NM_015100.3"/>
</dbReference>
<dbReference type="RefSeq" id="NP_665739.3">
    <molecule id="Q7Z3K3-5"/>
    <property type="nucleotide sequence ID" value="NM_145796.3"/>
</dbReference>
<dbReference type="RefSeq" id="NP_997054.1">
    <molecule id="Q7Z3K3-2"/>
    <property type="nucleotide sequence ID" value="NM_207171.2"/>
</dbReference>
<dbReference type="RefSeq" id="XP_005245056.1">
    <property type="nucleotide sequence ID" value="XM_005244999.2"/>
</dbReference>
<dbReference type="RefSeq" id="XP_005245057.1">
    <molecule id="Q7Z3K3-1"/>
    <property type="nucleotide sequence ID" value="XM_005245000.5"/>
</dbReference>
<dbReference type="RefSeq" id="XP_005245058.1">
    <property type="nucleotide sequence ID" value="XM_005245001.2"/>
</dbReference>
<dbReference type="RefSeq" id="XP_005245062.1">
    <molecule id="Q7Z3K3-2"/>
    <property type="nucleotide sequence ID" value="XM_005245005.3"/>
</dbReference>
<dbReference type="RefSeq" id="XP_005245063.1">
    <property type="nucleotide sequence ID" value="XM_005245006.4"/>
</dbReference>
<dbReference type="RefSeq" id="XP_016856234.1">
    <property type="nucleotide sequence ID" value="XM_017000745.1"/>
</dbReference>
<dbReference type="RefSeq" id="XP_016856235.1">
    <molecule id="Q7Z3K3-6"/>
    <property type="nucleotide sequence ID" value="XM_017000746.2"/>
</dbReference>
<dbReference type="RefSeq" id="XP_016856237.1">
    <property type="nucleotide sequence ID" value="XM_017000748.1"/>
</dbReference>
<dbReference type="RefSeq" id="XP_016856238.1">
    <property type="nucleotide sequence ID" value="XM_017000749.1"/>
</dbReference>
<dbReference type="RefSeq" id="XP_047306020.1">
    <molecule id="Q7Z3K3-1"/>
    <property type="nucleotide sequence ID" value="XM_047450064.1"/>
</dbReference>
<dbReference type="RefSeq" id="XP_047306025.1">
    <molecule id="Q7Z3K3-7"/>
    <property type="nucleotide sequence ID" value="XM_047450069.1"/>
</dbReference>
<dbReference type="RefSeq" id="XP_054191294.1">
    <molecule id="Q7Z3K3-1"/>
    <property type="nucleotide sequence ID" value="XM_054335319.1"/>
</dbReference>
<dbReference type="RefSeq" id="XP_054191295.1">
    <molecule id="Q7Z3K3-1"/>
    <property type="nucleotide sequence ID" value="XM_054335320.1"/>
</dbReference>
<dbReference type="RefSeq" id="XP_054191297.1">
    <molecule id="Q7Z3K3-6"/>
    <property type="nucleotide sequence ID" value="XM_054335322.1"/>
</dbReference>
<dbReference type="RefSeq" id="XP_054191299.1">
    <molecule id="Q7Z3K3-2"/>
    <property type="nucleotide sequence ID" value="XM_054335324.1"/>
</dbReference>
<dbReference type="RefSeq" id="XP_054191301.1">
    <molecule id="Q7Z3K3-7"/>
    <property type="nucleotide sequence ID" value="XM_054335326.1"/>
</dbReference>
<dbReference type="PDB" id="2E72">
    <property type="method" value="NMR"/>
    <property type="chains" value="A=370-405"/>
</dbReference>
<dbReference type="PDB" id="2N3A">
    <property type="method" value="NMR"/>
    <property type="chains" value="A=1389-1404"/>
</dbReference>
<dbReference type="PDB" id="6EMP">
    <property type="method" value="NMR"/>
    <property type="chains" value="A=1370-1404"/>
</dbReference>
<dbReference type="PDBsum" id="2E72"/>
<dbReference type="PDBsum" id="2N3A"/>
<dbReference type="PDBsum" id="6EMP"/>
<dbReference type="BMRB" id="Q7Z3K3"/>
<dbReference type="SMR" id="Q7Z3K3"/>
<dbReference type="BioGRID" id="116745">
    <property type="interactions" value="271"/>
</dbReference>
<dbReference type="DIP" id="DIP-38044N"/>
<dbReference type="FunCoup" id="Q7Z3K3">
    <property type="interactions" value="5145"/>
</dbReference>
<dbReference type="IntAct" id="Q7Z3K3">
    <property type="interactions" value="235"/>
</dbReference>
<dbReference type="MINT" id="Q7Z3K3"/>
<dbReference type="STRING" id="9606.ENSP00000271715"/>
<dbReference type="GlyConnect" id="2865">
    <molecule id="Q7Z3K3-2"/>
    <property type="glycosylation" value="1 O-GlcNAc glycan (1 site)"/>
</dbReference>
<dbReference type="GlyCosmos" id="Q7Z3K3">
    <property type="glycosylation" value="21 sites, 2 glycans"/>
</dbReference>
<dbReference type="GlyGen" id="Q7Z3K3">
    <property type="glycosylation" value="44 sites, 1 N-linked glycan (1 site), 2 O-linked glycans (39 sites)"/>
</dbReference>
<dbReference type="iPTMnet" id="Q7Z3K3"/>
<dbReference type="PhosphoSitePlus" id="Q7Z3K3"/>
<dbReference type="SwissPalm" id="Q7Z3K3"/>
<dbReference type="BioMuta" id="POGZ"/>
<dbReference type="DMDM" id="143811442"/>
<dbReference type="jPOST" id="Q7Z3K3"/>
<dbReference type="MassIVE" id="Q7Z3K3"/>
<dbReference type="PaxDb" id="9606-ENSP00000271715"/>
<dbReference type="PeptideAtlas" id="Q7Z3K3"/>
<dbReference type="ProteomicsDB" id="22027"/>
<dbReference type="ProteomicsDB" id="69059">
    <molecule id="Q7Z3K3-1"/>
</dbReference>
<dbReference type="ProteomicsDB" id="69060">
    <molecule id="Q7Z3K3-2"/>
</dbReference>
<dbReference type="ProteomicsDB" id="69061">
    <molecule id="Q7Z3K3-3"/>
</dbReference>
<dbReference type="ProteomicsDB" id="69062">
    <molecule id="Q7Z3K3-4"/>
</dbReference>
<dbReference type="ProteomicsDB" id="69063">
    <molecule id="Q7Z3K3-5"/>
</dbReference>
<dbReference type="ProteomicsDB" id="7168"/>
<dbReference type="Pumba" id="Q7Z3K3"/>
<dbReference type="Antibodypedia" id="1872">
    <property type="antibodies" value="151 antibodies from 29 providers"/>
</dbReference>
<dbReference type="DNASU" id="23126"/>
<dbReference type="Ensembl" id="ENST00000271715.7">
    <molecule id="Q7Z3K3-1"/>
    <property type="protein sequence ID" value="ENSP00000271715.2"/>
    <property type="gene ID" value="ENSG00000143442.24"/>
</dbReference>
<dbReference type="Ensembl" id="ENST00000368863.6">
    <molecule id="Q7Z3K3-5"/>
    <property type="protein sequence ID" value="ENSP00000357856.2"/>
    <property type="gene ID" value="ENSG00000143442.24"/>
</dbReference>
<dbReference type="Ensembl" id="ENST00000392723.6">
    <molecule id="Q7Z3K3-2"/>
    <property type="protein sequence ID" value="ENSP00000376484.1"/>
    <property type="gene ID" value="ENSG00000143442.24"/>
</dbReference>
<dbReference type="Ensembl" id="ENST00000409503.5">
    <molecule id="Q7Z3K3-6"/>
    <property type="protein sequence ID" value="ENSP00000386836.1"/>
    <property type="gene ID" value="ENSG00000143442.24"/>
</dbReference>
<dbReference type="Ensembl" id="ENST00000439756.2">
    <molecule id="Q7Z3K3-1"/>
    <property type="protein sequence ID" value="ENSP00000390156.2"/>
    <property type="gene ID" value="ENSG00000143442.24"/>
</dbReference>
<dbReference type="Ensembl" id="ENST00000491586.5">
    <molecule id="Q7Z3K3-3"/>
    <property type="protein sequence ID" value="ENSP00000418408.1"/>
    <property type="gene ID" value="ENSG00000143442.24"/>
</dbReference>
<dbReference type="Ensembl" id="ENST00000531094.5">
    <molecule id="Q7Z3K3-7"/>
    <property type="protein sequence ID" value="ENSP00000431259.1"/>
    <property type="gene ID" value="ENSG00000143442.24"/>
</dbReference>
<dbReference type="GeneID" id="23126"/>
<dbReference type="KEGG" id="hsa:23126"/>
<dbReference type="MANE-Select" id="ENST00000271715.7">
    <property type="protein sequence ID" value="ENSP00000271715.2"/>
    <property type="RefSeq nucleotide sequence ID" value="NM_015100.4"/>
    <property type="RefSeq protein sequence ID" value="NP_055915.2"/>
</dbReference>
<dbReference type="UCSC" id="uc001eyd.2">
    <molecule id="Q7Z3K3-1"/>
    <property type="organism name" value="human"/>
</dbReference>
<dbReference type="AGR" id="HGNC:18801"/>
<dbReference type="CTD" id="23126"/>
<dbReference type="DisGeNET" id="23126"/>
<dbReference type="GeneCards" id="POGZ"/>
<dbReference type="GeneReviews" id="POGZ"/>
<dbReference type="HGNC" id="HGNC:18801">
    <property type="gene designation" value="POGZ"/>
</dbReference>
<dbReference type="HPA" id="ENSG00000143442">
    <property type="expression patterns" value="Low tissue specificity"/>
</dbReference>
<dbReference type="MalaCards" id="POGZ"/>
<dbReference type="MIM" id="614787">
    <property type="type" value="gene"/>
</dbReference>
<dbReference type="MIM" id="616364">
    <property type="type" value="phenotype"/>
</dbReference>
<dbReference type="neXtProt" id="NX_Q7Z3K3"/>
<dbReference type="OpenTargets" id="ENSG00000143442"/>
<dbReference type="Orphanet" id="468678">
    <property type="disease" value="White-Sutton syndrome"/>
</dbReference>
<dbReference type="PharmGKB" id="PA38685"/>
<dbReference type="VEuPathDB" id="HostDB:ENSG00000143442"/>
<dbReference type="eggNOG" id="KOG1721">
    <property type="taxonomic scope" value="Eukaryota"/>
</dbReference>
<dbReference type="eggNOG" id="KOG3105">
    <property type="taxonomic scope" value="Eukaryota"/>
</dbReference>
<dbReference type="GeneTree" id="ENSGT00940000160649"/>
<dbReference type="HOGENOM" id="CLU_002015_0_0_1"/>
<dbReference type="InParanoid" id="Q7Z3K3"/>
<dbReference type="OMA" id="KSMKNTC"/>
<dbReference type="OrthoDB" id="5876240at2759"/>
<dbReference type="PAN-GO" id="Q7Z3K3">
    <property type="GO annotations" value="2 GO annotations based on evolutionary models"/>
</dbReference>
<dbReference type="PhylomeDB" id="Q7Z3K3"/>
<dbReference type="TreeFam" id="TF331707"/>
<dbReference type="PathwayCommons" id="Q7Z3K3"/>
<dbReference type="SignaLink" id="Q7Z3K3"/>
<dbReference type="SIGNOR" id="Q7Z3K3"/>
<dbReference type="BioGRID-ORCS" id="23126">
    <property type="hits" value="242 hits in 1163 CRISPR screens"/>
</dbReference>
<dbReference type="ChiTaRS" id="POGZ">
    <property type="organism name" value="human"/>
</dbReference>
<dbReference type="EvolutionaryTrace" id="Q7Z3K3"/>
<dbReference type="GeneWiki" id="POGZ"/>
<dbReference type="GenomeRNAi" id="23126"/>
<dbReference type="Pharos" id="Q7Z3K3">
    <property type="development level" value="Tbio"/>
</dbReference>
<dbReference type="PRO" id="PR:Q7Z3K3"/>
<dbReference type="Proteomes" id="UP000005640">
    <property type="component" value="Chromosome 1"/>
</dbReference>
<dbReference type="RNAct" id="Q7Z3K3">
    <property type="molecule type" value="protein"/>
</dbReference>
<dbReference type="Bgee" id="ENSG00000143442">
    <property type="expression patterns" value="Expressed in right uterine tube and 204 other cell types or tissues"/>
</dbReference>
<dbReference type="ExpressionAtlas" id="Q7Z3K3">
    <property type="expression patterns" value="baseline and differential"/>
</dbReference>
<dbReference type="GO" id="GO:0000785">
    <property type="term" value="C:chromatin"/>
    <property type="evidence" value="ECO:0000314"/>
    <property type="project" value="UniProtKB"/>
</dbReference>
<dbReference type="GO" id="GO:0036064">
    <property type="term" value="C:ciliary basal body"/>
    <property type="evidence" value="ECO:0000314"/>
    <property type="project" value="HPA"/>
</dbReference>
<dbReference type="GO" id="GO:0005737">
    <property type="term" value="C:cytoplasm"/>
    <property type="evidence" value="ECO:0000314"/>
    <property type="project" value="UniProtKB"/>
</dbReference>
<dbReference type="GO" id="GO:0005829">
    <property type="term" value="C:cytosol"/>
    <property type="evidence" value="ECO:0000314"/>
    <property type="project" value="HPA"/>
</dbReference>
<dbReference type="GO" id="GO:0005654">
    <property type="term" value="C:nucleoplasm"/>
    <property type="evidence" value="ECO:0000314"/>
    <property type="project" value="HPA"/>
</dbReference>
<dbReference type="GO" id="GO:0005634">
    <property type="term" value="C:nucleus"/>
    <property type="evidence" value="ECO:0000314"/>
    <property type="project" value="UniProtKB"/>
</dbReference>
<dbReference type="GO" id="GO:0005886">
    <property type="term" value="C:plasma membrane"/>
    <property type="evidence" value="ECO:0000314"/>
    <property type="project" value="HPA"/>
</dbReference>
<dbReference type="GO" id="GO:0003677">
    <property type="term" value="F:DNA binding"/>
    <property type="evidence" value="ECO:0007669"/>
    <property type="project" value="UniProtKB-KW"/>
</dbReference>
<dbReference type="GO" id="GO:0008270">
    <property type="term" value="F:zinc ion binding"/>
    <property type="evidence" value="ECO:0007669"/>
    <property type="project" value="UniProtKB-KW"/>
</dbReference>
<dbReference type="GO" id="GO:0051301">
    <property type="term" value="P:cell division"/>
    <property type="evidence" value="ECO:0007669"/>
    <property type="project" value="UniProtKB-KW"/>
</dbReference>
<dbReference type="GO" id="GO:0000724">
    <property type="term" value="P:double-strand break repair via homologous recombination"/>
    <property type="evidence" value="ECO:0000315"/>
    <property type="project" value="UniProtKB"/>
</dbReference>
<dbReference type="GO" id="GO:0051382">
    <property type="term" value="P:kinetochore assembly"/>
    <property type="evidence" value="ECO:0000315"/>
    <property type="project" value="UniProtKB"/>
</dbReference>
<dbReference type="GO" id="GO:0007064">
    <property type="term" value="P:mitotic sister chromatid cohesion"/>
    <property type="evidence" value="ECO:0000315"/>
    <property type="project" value="UniProtKB"/>
</dbReference>
<dbReference type="GO" id="GO:0045944">
    <property type="term" value="P:positive regulation of transcription by RNA polymerase II"/>
    <property type="evidence" value="ECO:0000318"/>
    <property type="project" value="GO_Central"/>
</dbReference>
<dbReference type="FunFam" id="3.30.160.60:FF:000405">
    <property type="entry name" value="pogo transposable element with ZNF domain isoform X1"/>
    <property type="match status" value="1"/>
</dbReference>
<dbReference type="Gene3D" id="3.30.160.60">
    <property type="entry name" value="Classic Zinc Finger"/>
    <property type="match status" value="2"/>
</dbReference>
<dbReference type="Gene3D" id="1.10.10.60">
    <property type="entry name" value="Homeodomain-like"/>
    <property type="match status" value="1"/>
</dbReference>
<dbReference type="InterPro" id="IPR004875">
    <property type="entry name" value="DDE_SF_endonuclease_dom"/>
</dbReference>
<dbReference type="InterPro" id="IPR009057">
    <property type="entry name" value="Homeodomain-like_sf"/>
</dbReference>
<dbReference type="InterPro" id="IPR006600">
    <property type="entry name" value="HTH_CenpB_DNA-bd_dom"/>
</dbReference>
<dbReference type="InterPro" id="IPR050527">
    <property type="entry name" value="Snail/Krueppel_Znf"/>
</dbReference>
<dbReference type="InterPro" id="IPR036236">
    <property type="entry name" value="Znf_C2H2_sf"/>
</dbReference>
<dbReference type="InterPro" id="IPR013087">
    <property type="entry name" value="Znf_C2H2_type"/>
</dbReference>
<dbReference type="PANTHER" id="PTHR24388:SF45">
    <property type="entry name" value="POGO TRANSPOSABLE ELEMENT DERIVED WITH ZNF DOMAIN"/>
    <property type="match status" value="1"/>
</dbReference>
<dbReference type="PANTHER" id="PTHR24388">
    <property type="entry name" value="ZINC FINGER PROTEIN"/>
    <property type="match status" value="1"/>
</dbReference>
<dbReference type="Pfam" id="PF03184">
    <property type="entry name" value="DDE_1"/>
    <property type="match status" value="1"/>
</dbReference>
<dbReference type="Pfam" id="PF03221">
    <property type="entry name" value="HTH_Tnp_Tc5"/>
    <property type="match status" value="1"/>
</dbReference>
<dbReference type="Pfam" id="PF25414">
    <property type="entry name" value="zf-C2H2_Z280C_D"/>
    <property type="match status" value="1"/>
</dbReference>
<dbReference type="Pfam" id="PF25429">
    <property type="entry name" value="zf-POGZ"/>
    <property type="match status" value="1"/>
</dbReference>
<dbReference type="SMART" id="SM00674">
    <property type="entry name" value="CENPB"/>
    <property type="match status" value="1"/>
</dbReference>
<dbReference type="SMART" id="SM00355">
    <property type="entry name" value="ZnF_C2H2"/>
    <property type="match status" value="8"/>
</dbReference>
<dbReference type="SUPFAM" id="SSF57667">
    <property type="entry name" value="beta-beta-alpha zinc fingers"/>
    <property type="match status" value="2"/>
</dbReference>
<dbReference type="SUPFAM" id="SSF46689">
    <property type="entry name" value="Homeodomain-like"/>
    <property type="match status" value="1"/>
</dbReference>
<dbReference type="PROSITE" id="PS51253">
    <property type="entry name" value="HTH_CENPB"/>
    <property type="match status" value="1"/>
</dbReference>
<dbReference type="PROSITE" id="PS00028">
    <property type="entry name" value="ZINC_FINGER_C2H2_1"/>
    <property type="match status" value="5"/>
</dbReference>
<dbReference type="PROSITE" id="PS50157">
    <property type="entry name" value="ZINC_FINGER_C2H2_2"/>
    <property type="match status" value="2"/>
</dbReference>
<evidence type="ECO:0000255" key="1"/>
<evidence type="ECO:0000255" key="2">
    <source>
        <dbReference type="PROSITE-ProRule" id="PRU00042"/>
    </source>
</evidence>
<evidence type="ECO:0000255" key="3">
    <source>
        <dbReference type="PROSITE-ProRule" id="PRU00583"/>
    </source>
</evidence>
<evidence type="ECO:0000256" key="4">
    <source>
        <dbReference type="SAM" id="MobiDB-lite"/>
    </source>
</evidence>
<evidence type="ECO:0000269" key="5">
    <source>
    </source>
</evidence>
<evidence type="ECO:0000269" key="6">
    <source>
    </source>
</evidence>
<evidence type="ECO:0000269" key="7">
    <source>
    </source>
</evidence>
<evidence type="ECO:0000269" key="8">
    <source>
    </source>
</evidence>
<evidence type="ECO:0000269" key="9">
    <source>
    </source>
</evidence>
<evidence type="ECO:0000269" key="10">
    <source>
    </source>
</evidence>
<evidence type="ECO:0000269" key="11">
    <source>
    </source>
</evidence>
<evidence type="ECO:0000269" key="12">
    <source>
    </source>
</evidence>
<evidence type="ECO:0000269" key="13">
    <source>
    </source>
</evidence>
<evidence type="ECO:0000269" key="14">
    <source>
    </source>
</evidence>
<evidence type="ECO:0000303" key="15">
    <source>
    </source>
</evidence>
<evidence type="ECO:0000303" key="16">
    <source>
    </source>
</evidence>
<evidence type="ECO:0000303" key="17">
    <source>
    </source>
</evidence>
<evidence type="ECO:0000303" key="18">
    <source>
    </source>
</evidence>
<evidence type="ECO:0000305" key="19"/>
<evidence type="ECO:0007744" key="20">
    <source>
        <dbReference type="PDB" id="6EMP"/>
    </source>
</evidence>
<evidence type="ECO:0007744" key="21">
    <source>
    </source>
</evidence>
<evidence type="ECO:0007744" key="22">
    <source>
    </source>
</evidence>
<evidence type="ECO:0007744" key="23">
    <source>
    </source>
</evidence>
<evidence type="ECO:0007744" key="24">
    <source>
    </source>
</evidence>
<evidence type="ECO:0007744" key="25">
    <source>
    </source>
</evidence>
<evidence type="ECO:0007744" key="26">
    <source>
    </source>
</evidence>
<evidence type="ECO:0007744" key="27">
    <source>
    </source>
</evidence>
<evidence type="ECO:0007829" key="28">
    <source>
        <dbReference type="PDB" id="2E72"/>
    </source>
</evidence>
<evidence type="ECO:0007829" key="29">
    <source>
        <dbReference type="PDB" id="6EMP"/>
    </source>
</evidence>
<name>POGZ_HUMAN</name>
<accession>Q7Z3K3</accession>
<accession>B4DTP8</accession>
<accession>B4DYL9</accession>
<accession>B7ZBY5</accession>
<accession>E9PM80</accession>
<accession>O75049</accession>
<accession>Q3LIC4</accession>
<accession>Q5SZS1</accession>
<accession>Q5SZS2</accession>
<accession>Q5SZS3</accession>
<accession>Q5SZS4</accession>
<accession>Q8TDZ7</accession>
<accession>Q9Y4X7</accession>
<comment type="function">
    <text evidence="7 12">Plays a role in mitotic cell cycle progression and is involved in kinetochore assembly and mitotic sister chromatid cohesion. Probably through its association with CBX5 plays a role in mitotic chromosome segregation by regulating aurora kinase B/AURKB activation and AURKB and CBX5 dissociation from chromosome arms (PubMed:20562864). Promotes the repair of DNA double-strand breaks through the homologous recombination pathway (PubMed:26721387).</text>
</comment>
<comment type="subunit">
    <text evidence="5 6 7 8 9 12 14">Interacts with CBX1, CBX3, MAD2L2 and CHAMP1. Interacts with CBX5; POGZ competes with PXVXL motif-containing proteins such as INCENP and TRIM28 for interaction with CBX5. Interacts (via IBM motif) with PSIP1 isoform 1 (via IBD domain); phosphorylation increases its affinity for PSIP1 (PubMed:19244240, PubMed:25082813, PubMed:29997176). Interacts with HDGFL2 (PubMed:26721387).</text>
</comment>
<comment type="interaction">
    <interactant intactId="EBI-1389308">
        <id>Q7Z3K3</id>
    </interactant>
    <interactant intactId="EBI-2809489">
        <id>Q9NQ94</id>
        <label>A1CF</label>
    </interactant>
    <organismsDiffer>false</organismsDiffer>
    <experiments>3</experiments>
</comment>
<comment type="interaction">
    <interactant intactId="EBI-1389308">
        <id>Q7Z3K3</id>
    </interactant>
    <interactant intactId="EBI-11976299">
        <id>Q5BKX5-3</id>
        <label>ACTMAP</label>
    </interactant>
    <organismsDiffer>false</organismsDiffer>
    <experiments>3</experiments>
</comment>
<comment type="interaction">
    <interactant intactId="EBI-1389308">
        <id>Q7Z3K3</id>
    </interactant>
    <interactant intactId="EBI-712648">
        <id>O95994</id>
        <label>AGR2</label>
    </interactant>
    <organismsDiffer>false</organismsDiffer>
    <experiments>3</experiments>
</comment>
<comment type="interaction">
    <interactant intactId="EBI-1389308">
        <id>Q7Z3K3</id>
    </interactant>
    <interactant intactId="EBI-12102070">
        <id>Q9NXR5-2</id>
        <label>ANKRD10</label>
    </interactant>
    <organismsDiffer>false</organismsDiffer>
    <experiments>3</experiments>
</comment>
<comment type="interaction">
    <interactant intactId="EBI-1389308">
        <id>Q7Z3K3</id>
    </interactant>
    <interactant intactId="EBI-12826295">
        <id>P19801</id>
        <label>AOC1</label>
    </interactant>
    <organismsDiffer>false</organismsDiffer>
    <experiments>3</experiments>
</comment>
<comment type="interaction">
    <interactant intactId="EBI-1389308">
        <id>Q7Z3K3</id>
    </interactant>
    <interactant intactId="EBI-12015080">
        <id>Q8WXK3-2</id>
        <label>ASB13</label>
    </interactant>
    <organismsDiffer>false</organismsDiffer>
    <experiments>3</experiments>
</comment>
<comment type="interaction">
    <interactant intactId="EBI-1389308">
        <id>Q7Z3K3</id>
    </interactant>
    <interactant intactId="EBI-930964">
        <id>P54253</id>
        <label>ATXN1</label>
    </interactant>
    <organismsDiffer>false</organismsDiffer>
    <experiments>3</experiments>
</comment>
<comment type="interaction">
    <interactant intactId="EBI-1389308">
        <id>Q7Z3K3</id>
    </interactant>
    <interactant intactId="EBI-16429313">
        <id>B4DE54</id>
        <label>BANP</label>
    </interactant>
    <organismsDiffer>false</organismsDiffer>
    <experiments>3</experiments>
</comment>
<comment type="interaction">
    <interactant intactId="EBI-1389308">
        <id>Q7Z3K3</id>
    </interactant>
    <interactant intactId="EBI-744695">
        <id>Q8N9N5</id>
        <label>BANP</label>
    </interactant>
    <organismsDiffer>false</organismsDiffer>
    <experiments>5</experiments>
</comment>
<comment type="interaction">
    <interactant intactId="EBI-1389308">
        <id>Q7Z3K3</id>
    </interactant>
    <interactant intactId="EBI-11524452">
        <id>Q8N9N5-2</id>
        <label>BANP</label>
    </interactant>
    <organismsDiffer>false</organismsDiffer>
    <experiments>10</experiments>
</comment>
<comment type="interaction">
    <interactant intactId="EBI-1389308">
        <id>Q7Z3K3</id>
    </interactant>
    <interactant intactId="EBI-16429296">
        <id>Q8N9N5-7</id>
        <label>BANP</label>
    </interactant>
    <organismsDiffer>false</organismsDiffer>
    <experiments>3</experiments>
</comment>
<comment type="interaction">
    <interactant intactId="EBI-1389308">
        <id>Q7Z3K3</id>
    </interactant>
    <interactant intactId="EBI-11983447">
        <id>Q8N9W6-4</id>
        <label>BOLL</label>
    </interactant>
    <organismsDiffer>false</organismsDiffer>
    <experiments>3</experiments>
</comment>
<comment type="interaction">
    <interactant intactId="EBI-1389308">
        <id>Q7Z3K3</id>
    </interactant>
    <interactant intactId="EBI-12809220">
        <id>Q5SWW7</id>
        <label>C10orf55</label>
    </interactant>
    <organismsDiffer>false</organismsDiffer>
    <experiments>5</experiments>
</comment>
<comment type="interaction">
    <interactant intactId="EBI-1389308">
        <id>Q7Z3K3</id>
    </interactant>
    <interactant intactId="EBI-78219">
        <id>P45973</id>
        <label>CBX5</label>
    </interactant>
    <organismsDiffer>false</organismsDiffer>
    <experiments>8</experiments>
</comment>
<comment type="interaction">
    <interactant intactId="EBI-1389308">
        <id>Q7Z3K3</id>
    </interactant>
    <interactant intactId="EBI-12261896">
        <id>Q5T4B2</id>
        <label>CERCAM</label>
    </interactant>
    <organismsDiffer>false</organismsDiffer>
    <experiments>3</experiments>
</comment>
<comment type="interaction">
    <interactant intactId="EBI-1389308">
        <id>Q7Z3K3</id>
    </interactant>
    <interactant intactId="EBI-748171">
        <id>O43186</id>
        <label>CRX</label>
    </interactant>
    <organismsDiffer>false</organismsDiffer>
    <experiments>3</experiments>
</comment>
<comment type="interaction">
    <interactant intactId="EBI-1389308">
        <id>Q7Z3K3</id>
    </interactant>
    <interactant intactId="EBI-7875264">
        <id>O75553</id>
        <label>DAB1</label>
    </interactant>
    <organismsDiffer>false</organismsDiffer>
    <experiments>3</experiments>
</comment>
<comment type="interaction">
    <interactant intactId="EBI-1389308">
        <id>Q7Z3K3</id>
    </interactant>
    <interactant intactId="EBI-724310">
        <id>Q15038</id>
        <label>DAZAP2</label>
    </interactant>
    <organismsDiffer>false</organismsDiffer>
    <experiments>8</experiments>
</comment>
<comment type="interaction">
    <interactant intactId="EBI-1389308">
        <id>Q7Z3K3</id>
    </interactant>
    <interactant intactId="EBI-14753788">
        <id>B2RWN7</id>
        <label>DMXL1</label>
    </interactant>
    <organismsDiffer>false</organismsDiffer>
    <experiments>3</experiments>
</comment>
<comment type="interaction">
    <interactant intactId="EBI-1389308">
        <id>Q7Z3K3</id>
    </interactant>
    <interactant intactId="EBI-740376">
        <id>Q86UW9</id>
        <label>DTX2</label>
    </interactant>
    <organismsDiffer>false</organismsDiffer>
    <experiments>3</experiments>
</comment>
<comment type="interaction">
    <interactant intactId="EBI-1389308">
        <id>Q7Z3K3</id>
    </interactant>
    <interactant intactId="EBI-724968">
        <id>Q96D98</id>
        <label>EID2B</label>
    </interactant>
    <organismsDiffer>false</organismsDiffer>
    <experiments>3</experiments>
</comment>
<comment type="interaction">
    <interactant intactId="EBI-1389308">
        <id>Q7Z3K3</id>
    </interactant>
    <interactant intactId="EBI-711990">
        <id>O00303</id>
        <label>EIF3F</label>
    </interactant>
    <organismsDiffer>false</organismsDiffer>
    <experiments>3</experiments>
</comment>
<comment type="interaction">
    <interactant intactId="EBI-1389308">
        <id>Q7Z3K3</id>
    </interactant>
    <interactant intactId="EBI-12807776">
        <id>O00167-2</id>
        <label>EYA2</label>
    </interactant>
    <organismsDiffer>false</organismsDiffer>
    <experiments>3</experiments>
</comment>
<comment type="interaction">
    <interactant intactId="EBI-1389308">
        <id>Q7Z3K3</id>
    </interactant>
    <interactant intactId="EBI-12193763">
        <id>A1KXE4-2</id>
        <label>FAM168B</label>
    </interactant>
    <organismsDiffer>false</organismsDiffer>
    <experiments>3</experiments>
</comment>
<comment type="interaction">
    <interactant intactId="EBI-1389308">
        <id>Q7Z3K3</id>
    </interactant>
    <interactant intactId="EBI-4291312">
        <id>Q8N0W3</id>
        <label>FCSK</label>
    </interactant>
    <organismsDiffer>false</organismsDiffer>
    <experiments>3</experiments>
</comment>
<comment type="interaction">
    <interactant intactId="EBI-1389308">
        <id>Q7Z3K3</id>
    </interactant>
    <interactant intactId="EBI-701903">
        <id>Q14192</id>
        <label>FHL2</label>
    </interactant>
    <organismsDiffer>false</organismsDiffer>
    <experiments>3</experiments>
</comment>
<comment type="interaction">
    <interactant intactId="EBI-1389308">
        <id>Q7Z3K3</id>
    </interactant>
    <interactant intactId="EBI-10242151">
        <id>Q53EP0-3</id>
        <label>FNDC3B</label>
    </interactant>
    <organismsDiffer>false</organismsDiffer>
    <experiments>6</experiments>
</comment>
<comment type="interaction">
    <interactant intactId="EBI-1389308">
        <id>Q7Z3K3</id>
    </interactant>
    <interactant intactId="EBI-2806743">
        <id>P53539</id>
        <label>FOSB</label>
    </interactant>
    <organismsDiffer>false</organismsDiffer>
    <experiments>3</experiments>
</comment>
<comment type="interaction">
    <interactant intactId="EBI-1389308">
        <id>Q7Z3K3</id>
    </interactant>
    <interactant intactId="EBI-618165">
        <id>Q06547</id>
        <label>GABPB1</label>
    </interactant>
    <organismsDiffer>false</organismsDiffer>
    <experiments>5</experiments>
</comment>
<comment type="interaction">
    <interactant intactId="EBI-1389308">
        <id>Q7Z3K3</id>
    </interactant>
    <interactant intactId="EBI-948296">
        <id>Q9UKD1</id>
        <label>GMEB2</label>
    </interactant>
    <organismsDiffer>false</organismsDiffer>
    <experiments>3</experiments>
</comment>
<comment type="interaction">
    <interactant intactId="EBI-1389308">
        <id>Q7Z3K3</id>
    </interactant>
    <interactant intactId="EBI-740220">
        <id>O14964</id>
        <label>HGS</label>
    </interactant>
    <organismsDiffer>false</organismsDiffer>
    <experiments>6</experiments>
</comment>
<comment type="interaction">
    <interactant intactId="EBI-1389308">
        <id>Q7Z3K3</id>
    </interactant>
    <interactant intactId="EBI-7116203">
        <id>O75031</id>
        <label>HSF2BP</label>
    </interactant>
    <organismsDiffer>false</organismsDiffer>
    <experiments>3</experiments>
</comment>
<comment type="interaction">
    <interactant intactId="EBI-1389308">
        <id>Q7Z3K3</id>
    </interactant>
    <interactant intactId="EBI-739395">
        <id>Q16082</id>
        <label>HSPB2</label>
    </interactant>
    <organismsDiffer>false</organismsDiffer>
    <experiments>3</experiments>
</comment>
<comment type="interaction">
    <interactant intactId="EBI-1389308">
        <id>Q7Z3K3</id>
    </interactant>
    <interactant intactId="EBI-9090173">
        <id>P0C870</id>
        <label>JMJD7</label>
    </interactant>
    <organismsDiffer>false</organismsDiffer>
    <experiments>3</experiments>
</comment>
<comment type="interaction">
    <interactant intactId="EBI-1389308">
        <id>Q7Z3K3</id>
    </interactant>
    <interactant intactId="EBI-9478422">
        <id>Q96G42</id>
        <label>KLHDC7B</label>
    </interactant>
    <organismsDiffer>false</organismsDiffer>
    <experiments>3</experiments>
</comment>
<comment type="interaction">
    <interactant intactId="EBI-1389308">
        <id>Q7Z3K3</id>
    </interactant>
    <interactant intactId="EBI-724915">
        <id>Q53HC5</id>
        <label>KLHL26</label>
    </interactant>
    <organismsDiffer>false</organismsDiffer>
    <experiments>3</experiments>
</comment>
<comment type="interaction">
    <interactant intactId="EBI-1389308">
        <id>Q7Z3K3</id>
    </interactant>
    <interactant intactId="EBI-751260">
        <id>Q9BYR7</id>
        <label>KRTAP3-2</label>
    </interactant>
    <organismsDiffer>false</organismsDiffer>
    <experiments>3</experiments>
</comment>
<comment type="interaction">
    <interactant intactId="EBI-1389308">
        <id>Q7Z3K3</id>
    </interactant>
    <interactant intactId="EBI-11962084">
        <id>Q3LI66</id>
        <label>KRTAP6-2</label>
    </interactant>
    <organismsDiffer>false</organismsDiffer>
    <experiments>5</experiments>
</comment>
<comment type="interaction">
    <interactant intactId="EBI-1389308">
        <id>Q7Z3K3</id>
    </interactant>
    <interactant intactId="EBI-10261141">
        <id>Q8IUC2</id>
        <label>KRTAP8-1</label>
    </interactant>
    <organismsDiffer>false</organismsDiffer>
    <experiments>5</experiments>
</comment>
<comment type="interaction">
    <interactant intactId="EBI-1389308">
        <id>Q7Z3K3</id>
    </interactant>
    <interactant intactId="EBI-725647">
        <id>Q99732</id>
        <label>LITAF</label>
    </interactant>
    <organismsDiffer>false</organismsDiffer>
    <experiments>3</experiments>
</comment>
<comment type="interaction">
    <interactant intactId="EBI-1389308">
        <id>Q7Z3K3</id>
    </interactant>
    <interactant intactId="EBI-351119">
        <id>O43795</id>
        <label>MYO1B</label>
    </interactant>
    <organismsDiffer>false</organismsDiffer>
    <experiments>3</experiments>
</comment>
<comment type="interaction">
    <interactant intactId="EBI-1389308">
        <id>Q7Z3K3</id>
    </interactant>
    <interactant intactId="EBI-389739">
        <id>P23511</id>
        <label>NFYA</label>
    </interactant>
    <organismsDiffer>false</organismsDiffer>
    <experiments>3</experiments>
</comment>
<comment type="interaction">
    <interactant intactId="EBI-1389308">
        <id>Q7Z3K3</id>
    </interactant>
    <interactant intactId="EBI-11061759">
        <id>P23511-2</id>
        <label>NFYA</label>
    </interactant>
    <organismsDiffer>false</organismsDiffer>
    <experiments>3</experiments>
</comment>
<comment type="interaction">
    <interactant intactId="EBI-1389308">
        <id>Q7Z3K3</id>
    </interactant>
    <interactant intactId="EBI-11956831">
        <id>Q13952-2</id>
        <label>NFYC</label>
    </interactant>
    <organismsDiffer>false</organismsDiffer>
    <experiments>3</experiments>
</comment>
<comment type="interaction">
    <interactant intactId="EBI-1389308">
        <id>Q7Z3K3</id>
    </interactant>
    <interactant intactId="EBI-12868744">
        <id>P0CG21</id>
        <label>NHLRC4</label>
    </interactant>
    <organismsDiffer>false</organismsDiffer>
    <experiments>3</experiments>
</comment>
<comment type="interaction">
    <interactant intactId="EBI-1389308">
        <id>Q7Z3K3</id>
    </interactant>
    <interactant intactId="EBI-13324229">
        <id>Q9BSH3</id>
        <label>NICN1</label>
    </interactant>
    <organismsDiffer>false</organismsDiffer>
    <experiments>3</experiments>
</comment>
<comment type="interaction">
    <interactant intactId="EBI-1389308">
        <id>Q7Z3K3</id>
    </interactant>
    <interactant intactId="EBI-2547810">
        <id>Q16656</id>
        <label>NRF1</label>
    </interactant>
    <organismsDiffer>false</organismsDiffer>
    <experiments>3</experiments>
</comment>
<comment type="interaction">
    <interactant intactId="EBI-1389308">
        <id>Q7Z3K3</id>
    </interactant>
    <interactant intactId="EBI-11742836">
        <id>Q16656-4</id>
        <label>NRF1</label>
    </interactant>
    <organismsDiffer>false</organismsDiffer>
    <experiments>7</experiments>
</comment>
<comment type="interaction">
    <interactant intactId="EBI-1389308">
        <id>Q7Z3K3</id>
    </interactant>
    <interactant intactId="EBI-5774125">
        <id>A1E959</id>
        <label>ODAM</label>
    </interactant>
    <organismsDiffer>false</organismsDiffer>
    <experiments>3</experiments>
</comment>
<comment type="interaction">
    <interactant intactId="EBI-1389308">
        <id>Q7Z3K3</id>
    </interactant>
    <interactant intactId="EBI-357275">
        <id>Q99471</id>
        <label>PFDN5</label>
    </interactant>
    <organismsDiffer>false</organismsDiffer>
    <experiments>3</experiments>
</comment>
<comment type="interaction">
    <interactant intactId="EBI-1389308">
        <id>Q7Z3K3</id>
    </interactant>
    <interactant intactId="EBI-12326369">
        <id>Q9HB75-2</id>
        <label>PIDD1</label>
    </interactant>
    <organismsDiffer>false</organismsDiffer>
    <experiments>3</experiments>
</comment>
<comment type="interaction">
    <interactant intactId="EBI-1389308">
        <id>Q7Z3K3</id>
    </interactant>
    <interactant intactId="EBI-373552">
        <id>Q96CS7</id>
        <label>PLEKHB2</label>
    </interactant>
    <organismsDiffer>false</organismsDiffer>
    <experiments>3</experiments>
</comment>
<comment type="interaction">
    <interactant intactId="EBI-1389308">
        <id>Q7Z3K3</id>
    </interactant>
    <interactant intactId="EBI-2115275">
        <id>Q99541</id>
        <label>PLIN2</label>
    </interactant>
    <organismsDiffer>false</organismsDiffer>
    <experiments>3</experiments>
</comment>
<comment type="interaction">
    <interactant intactId="EBI-1389308">
        <id>Q7Z3K3</id>
    </interactant>
    <interactant intactId="EBI-943588">
        <id>Q16633</id>
        <label>POU2AF1</label>
    </interactant>
    <organismsDiffer>false</organismsDiffer>
    <experiments>3</experiments>
</comment>
<comment type="interaction">
    <interactant intactId="EBI-1389308">
        <id>Q7Z3K3</id>
    </interactant>
    <interactant intactId="EBI-624770">
        <id>P14859</id>
        <label>POU2F1</label>
    </interactant>
    <organismsDiffer>false</organismsDiffer>
    <experiments>3</experiments>
</comment>
<comment type="interaction">
    <interactant intactId="EBI-1389308">
        <id>Q7Z3K3</id>
    </interactant>
    <interactant intactId="EBI-10172814">
        <id>P86479</id>
        <label>PRR20C</label>
    </interactant>
    <organismsDiffer>false</organismsDiffer>
    <experiments>3</experiments>
</comment>
<comment type="interaction">
    <interactant intactId="EBI-1389308">
        <id>Q7Z3K3</id>
    </interactant>
    <interactant intactId="EBI-12754095">
        <id>P86480</id>
        <label>PRR20D</label>
    </interactant>
    <organismsDiffer>false</organismsDiffer>
    <experiments>3</experiments>
</comment>
<comment type="interaction">
    <interactant intactId="EBI-1389308">
        <id>Q7Z3K3</id>
    </interactant>
    <interactant intactId="EBI-2798044">
        <id>Q2TAL8</id>
        <label>QRICH1</label>
    </interactant>
    <organismsDiffer>false</organismsDiffer>
    <experiments>7</experiments>
</comment>
<comment type="interaction">
    <interactant intactId="EBI-1389308">
        <id>Q7Z3K3</id>
    </interactant>
    <interactant intactId="EBI-12123390">
        <id>Q9NWB1-5</id>
        <label>RBFOX1</label>
    </interactant>
    <organismsDiffer>false</organismsDiffer>
    <experiments>5</experiments>
</comment>
<comment type="interaction">
    <interactant intactId="EBI-1389308">
        <id>Q7Z3K3</id>
    </interactant>
    <interactant intactId="EBI-740322">
        <id>Q93062</id>
        <label>RBPMS</label>
    </interactant>
    <organismsDiffer>false</organismsDiffer>
    <experiments>3</experiments>
</comment>
<comment type="interaction">
    <interactant intactId="EBI-1389308">
        <id>Q7Z3K3</id>
    </interactant>
    <interactant intactId="EBI-740343">
        <id>Q93062-3</id>
        <label>RBPMS</label>
    </interactant>
    <organismsDiffer>false</organismsDiffer>
    <experiments>5</experiments>
</comment>
<comment type="interaction">
    <interactant intactId="EBI-1389308">
        <id>Q7Z3K3</id>
    </interactant>
    <interactant intactId="EBI-12275818">
        <id>Q53HV7-2</id>
        <label>SMUG1</label>
    </interactant>
    <organismsDiffer>false</organismsDiffer>
    <experiments>3</experiments>
</comment>
<comment type="interaction">
    <interactant intactId="EBI-1389308">
        <id>Q7Z3K3</id>
    </interactant>
    <interactant intactId="EBI-298336">
        <id>P08047</id>
        <label>SP1</label>
    </interactant>
    <organismsDiffer>false</organismsDiffer>
    <experiments>2</experiments>
</comment>
<comment type="interaction">
    <interactant intactId="EBI-1389308">
        <id>Q7Z3K3</id>
    </interactant>
    <interactant intactId="EBI-348158">
        <id>Q02447</id>
        <label>SP3</label>
    </interactant>
    <organismsDiffer>false</organismsDiffer>
    <experiments>3</experiments>
</comment>
<comment type="interaction">
    <interactant intactId="EBI-1389308">
        <id>Q7Z3K3</id>
    </interactant>
    <interactant intactId="EBI-10198587">
        <id>Q02446</id>
        <label>SP4</label>
    </interactant>
    <organismsDiffer>false</organismsDiffer>
    <experiments>3</experiments>
</comment>
<comment type="interaction">
    <interactant intactId="EBI-1389308">
        <id>Q7Z3K3</id>
    </interactant>
    <interactant intactId="EBI-10696971">
        <id>Q7Z6I5</id>
        <label>SPATA12</label>
    </interactant>
    <organismsDiffer>false</organismsDiffer>
    <experiments>3</experiments>
</comment>
<comment type="interaction">
    <interactant intactId="EBI-1389308">
        <id>Q7Z3K3</id>
    </interactant>
    <interactant intactId="EBI-12408727">
        <id>Q5W111-2</id>
        <label>SPRYD7</label>
    </interactant>
    <organismsDiffer>false</organismsDiffer>
    <experiments>3</experiments>
</comment>
<comment type="interaction">
    <interactant intactId="EBI-1389308">
        <id>Q7Z3K3</id>
    </interactant>
    <interactant intactId="EBI-12843506">
        <id>Q8IWL8</id>
        <label>STH</label>
    </interactant>
    <organismsDiffer>false</organismsDiffer>
    <experiments>3</experiments>
</comment>
<comment type="interaction">
    <interactant intactId="EBI-1389308">
        <id>Q7Z3K3</id>
    </interactant>
    <interactant intactId="EBI-12096770">
        <id>O60806</id>
        <label>TBX19</label>
    </interactant>
    <organismsDiffer>false</organismsDiffer>
    <experiments>3</experiments>
</comment>
<comment type="interaction">
    <interactant intactId="EBI-1389308">
        <id>Q7Z3K3</id>
    </interactant>
    <interactant intactId="EBI-3914669">
        <id>Q13488</id>
        <label>TCIRG1</label>
    </interactant>
    <organismsDiffer>false</organismsDiffer>
    <experiments>3</experiments>
</comment>
<comment type="interaction">
    <interactant intactId="EBI-1389308">
        <id>Q7Z3K3</id>
    </interactant>
    <interactant intactId="EBI-12924766">
        <id>Q7Z782</id>
        <label>TMBIM4</label>
    </interactant>
    <organismsDiffer>false</organismsDiffer>
    <experiments>3</experiments>
</comment>
<comment type="interaction">
    <interactant intactId="EBI-1389308">
        <id>Q7Z3K3</id>
    </interactant>
    <interactant intactId="EBI-12806590">
        <id>Q86WV8</id>
        <label>TSC1</label>
    </interactant>
    <organismsDiffer>false</organismsDiffer>
    <experiments>3</experiments>
</comment>
<comment type="interaction">
    <interactant intactId="EBI-1389308">
        <id>Q7Z3K3</id>
    </interactant>
    <interactant intactId="EBI-12068150">
        <id>Q6NVU6</id>
        <label>UFSP1</label>
    </interactant>
    <organismsDiffer>false</organismsDiffer>
    <experiments>3</experiments>
</comment>
<comment type="interaction">
    <interactant intactId="EBI-1389308">
        <id>Q7Z3K3</id>
    </interactant>
    <interactant intactId="EBI-11980193">
        <id>Q14119</id>
        <label>VEZF1</label>
    </interactant>
    <organismsDiffer>false</organismsDiffer>
    <experiments>3</experiments>
</comment>
<comment type="interaction">
    <interactant intactId="EBI-1389308">
        <id>Q7Z3K3</id>
    </interactant>
    <interactant intactId="EBI-11957216">
        <id>A8MV65-2</id>
        <label>VGLL3</label>
    </interactant>
    <organismsDiffer>false</organismsDiffer>
    <experiments>3</experiments>
</comment>
<comment type="interaction">
    <interactant intactId="EBI-1389308">
        <id>Q7Z3K3</id>
    </interactant>
    <interactant intactId="EBI-744471">
        <id>O43167</id>
        <label>ZBTB24</label>
    </interactant>
    <organismsDiffer>false</organismsDiffer>
    <experiments>8</experiments>
</comment>
<comment type="interaction">
    <interactant intactId="EBI-1389308">
        <id>Q7Z3K3</id>
    </interactant>
    <interactant intactId="EBI-2849334">
        <id>P52747</id>
        <label>ZNF143</label>
    </interactant>
    <organismsDiffer>false</organismsDiffer>
    <experiments>3</experiments>
</comment>
<comment type="interaction">
    <interactant intactId="EBI-1389308">
        <id>Q7Z3K3</id>
    </interactant>
    <interactant intactId="EBI-11741890">
        <id>Q86VK4-3</id>
        <label>ZNF410</label>
    </interactant>
    <organismsDiffer>false</organismsDiffer>
    <experiments>3</experiments>
</comment>
<comment type="interaction">
    <interactant intactId="EBI-1389308">
        <id>Q7Z3K3</id>
    </interactant>
    <interactant intactId="EBI-18096911">
        <id>Q8N1W2</id>
        <label>ZNF710</label>
    </interactant>
    <organismsDiffer>false</organismsDiffer>
    <experiments>3</experiments>
</comment>
<comment type="interaction">
    <interactant intactId="EBI-1389308">
        <id>Q7Z3K3</id>
    </interactant>
    <interactant intactId="EBI-7254550">
        <id>P36508</id>
        <label>ZNF76</label>
    </interactant>
    <organismsDiffer>false</organismsDiffer>
    <experiments>3</experiments>
</comment>
<comment type="interaction">
    <interactant intactId="EBI-1389308">
        <id>Q7Z3K3</id>
    </interactant>
    <interactant intactId="EBI-1538838">
        <id>Q2QGD7</id>
        <label>ZXDC</label>
    </interactant>
    <organismsDiffer>false</organismsDiffer>
    <experiments>4</experiments>
</comment>
<comment type="interaction">
    <interactant intactId="EBI-1389308">
        <id>Q7Z3K3</id>
    </interactant>
    <interactant intactId="EBI-10177989">
        <id>G4XUV3</id>
    </interactant>
    <organismsDiffer>false</organismsDiffer>
    <experiments>3</experiments>
</comment>
<comment type="interaction">
    <interactant intactId="EBI-1389308">
        <id>Q7Z3K3</id>
    </interactant>
    <interactant intactId="EBI-10218875">
        <id>Q9H891</id>
    </interactant>
    <organismsDiffer>false</organismsDiffer>
    <experiments>3</experiments>
</comment>
<comment type="subcellular location">
    <subcellularLocation>
        <location evidence="12">Nucleus</location>
    </subcellularLocation>
    <subcellularLocation>
        <location>Chromosome</location>
    </subcellularLocation>
    <subcellularLocation>
        <location>Cytoplasm</location>
    </subcellularLocation>
    <text evidence="6">According to some authors, it is not localized to mitotic chromatin (PubMed:19244240). Recruited to trimethylated 'Lys-9' of histone H3 (H3K9me3).</text>
</comment>
<comment type="alternative products">
    <event type="alternative splicing"/>
    <isoform>
        <id>Q7Z3K3-1</id>
        <name>1</name>
        <sequence type="displayed"/>
    </isoform>
    <isoform>
        <id>Q7Z3K3-2</id>
        <name>2</name>
        <sequence type="described" ref="VSP_010185"/>
    </isoform>
    <isoform>
        <id>Q7Z3K3-3</id>
        <name>3</name>
        <sequence type="described" ref="VSP_010185 VSP_010186"/>
    </isoform>
    <isoform>
        <id>Q7Z3K3-4</id>
        <name>4</name>
        <sequence type="described" ref="VSP_010187 VSP_010188"/>
    </isoform>
    <isoform>
        <id>Q7Z3K3-5</id>
        <name>5</name>
        <name>CRA_e</name>
        <sequence type="described" ref="VSP_030150"/>
    </isoform>
    <isoform>
        <id>Q7Z3K3-6</id>
        <name>6</name>
        <sequence type="described" ref="VSP_046785"/>
    </isoform>
    <isoform>
        <id>Q7Z3K3-7</id>
        <name>7</name>
        <sequence type="described" ref="VSP_010185 VSP_046785"/>
    </isoform>
</comment>
<comment type="PTM">
    <text evidence="14">Phosphorylation increases its interaction with PSIP1.</text>
</comment>
<comment type="disease">
    <text evidence="11">Defects in POGZ may be associated with neuropsychiatric disorders such as autism spectrum disorders (ASD), bipolar affective disorders and early dementia onset. ASD are characterized by impairments in reciprocal social interaction and communication as well as restricted and stereotyped patterns of interest and activities. ASD include forms with moderate to severe cognitive impairment and milder forms with higher cognitive ability (Asperger syndrome).</text>
</comment>
<comment type="disease" evidence="10 13">
    <disease id="DI-04421">
        <name>White-Sutton syndrome</name>
        <acronym>WHSUS</acronym>
        <description>An autosomal dominant syndrome characterized by developmental delay, intellectual disability, hypotonia, behavioral abnormalities, and dysmorphic facial features. Variable features include short stature, microcephaly, strabismus and hearing loss.</description>
        <dbReference type="MIM" id="616364"/>
    </disease>
    <text>The disease is caused by variants affecting the gene represented in this entry.</text>
</comment>
<comment type="sequence caution" evidence="19">
    <conflict type="erroneous initiation">
        <sequence resource="EMBL-CDS" id="BAE45744"/>
    </conflict>
    <text>Extended N-terminus.</text>
</comment>
<sequence length="1410" mass="155344">MADTDLFMECEEEELEPWQKISDVIEDSVVEDYNSVDKTTTVSVSQQPVSAPVPIAAHASVAGHLSTSTTVSSSGAQNSDSTKKTLVTLIANNNAGNPLVQQGGQPLILTQNPAPGLGTMVTQPVLRPVQVMQNANHVTSSPVASQPIFITTQGFPVRNVRPVQNAMNQVGIVLNVQQGQTVRPITLVPAPGTQFVKPTVGVPQVFSQMTPVRPGSTMPVRPTTNTFTTVIPATLTIRSTVPQSQSQQTKSTPSTSTTPTATQPTSLGQLAVQSPGQSNQTTNPKLAPSFPSPPAVSIASFVTVKRPGVTGENSNEVAKLVNTLNTIPSLGQSPGPVVVSNNSSAHGSQRTSGPESSMKVTSSIPVFDLQDGGRKICPRCNAQFRVTEALRGHMCYCCPEMVEYQKKGKSLDSEPSVPSAAKPPSPEKTAPVASTPSSTPIPALSPPTKVPEPNENVGDAVQTKLIMLVDDFYYGRDGGKVAQLTNFPKVATSFRCPHCTKRLKNNIRFMNHMKHHVELDQQNGEVDGHTICQHCYRQFSTPFQLQCHLENVHSPYESTTKCKICEWAFESEPLFLQHMKDTHKPGEMPYVCQVCQYRSSLYSEVDVHFRMIHEDTRHLLCPYCLKVFKNGNAFQQHYMRHQKRNVYHCNKCRLQFLFAKDKIEHKLQHHKTFRKPKQLEGLKPGTKVTIRASRGQPRTVPVSSNDTPPSALQEAAPLTSSMDPLPVFLYPPVQRSIQKRAVRKMSVMGRQTCLECSFEIPDFPNHFPTYVHCSLCRYSTCCSRAYANHMINNHVPRKSPKYLALFKNSVSGIKLACTSCTFVTSVGDAMAKHLVFNPSHRSSSILPRGLTWIAHSRHGQTRDRVHDRNVKNMYPPPSFPTNKAATVKSAGATPAEPEELLTPLAPALPSPASTATPPPTPTHPQALALPPLATEGAECLNVDDQDEGSPVTQEPELASGGGGSGGVGKKEQLSVKKLRVVLFALCCNTEQAAEHFRNPQRRIRRWLRRFQASQGENLEGKYLSFEAEEKLAEWVLTQREQQLPVNEETLFQKATKIGRSLEGGFKISYEWAVRFMLRHHLTPHARRAVAHTLPKDVAENAGLFIDFVQRQIHNQDLPLSMIVAIDEISLFLDTEVLSSDDRKENALQTVGTGEPWCDVVLAILADGTVLPTLVFYRGQMDQPANMPDSILLEAKESGYSDDEIMELWSTRVWQKHTACQRSKGMLVMDCHRTHLSEEVLAMLSASSTLPAVVPAGCSSKIQPLDVCIKRTVKNFLHKKWKEQAREMADTACDSDVLLQLVLVWLGEVLGVIGDCPELVQRSFLVASVLPGPDGNINSPTRNADMQEELIASLEEQLKLSGEHSESSTPRPRSSPEETIEPESLHQLFEGESETESFYGFEEADLDLMEI</sequence>
<keyword id="KW-0002">3D-structure</keyword>
<keyword id="KW-0025">Alternative splicing</keyword>
<keyword id="KW-1268">Autism spectrum disorder</keyword>
<keyword id="KW-0131">Cell cycle</keyword>
<keyword id="KW-0132">Cell division</keyword>
<keyword id="KW-0158">Chromosome</keyword>
<keyword id="KW-0175">Coiled coil</keyword>
<keyword id="KW-0963">Cytoplasm</keyword>
<keyword id="KW-0225">Disease variant</keyword>
<keyword id="KW-0227">DNA damage</keyword>
<keyword id="KW-0233">DNA recombination</keyword>
<keyword id="KW-0234">DNA repair</keyword>
<keyword id="KW-0238">DNA-binding</keyword>
<keyword id="KW-0991">Intellectual disability</keyword>
<keyword id="KW-1017">Isopeptide bond</keyword>
<keyword id="KW-0479">Metal-binding</keyword>
<keyword id="KW-0539">Nucleus</keyword>
<keyword id="KW-0597">Phosphoprotein</keyword>
<keyword id="KW-1267">Proteomics identification</keyword>
<keyword id="KW-1185">Reference proteome</keyword>
<keyword id="KW-0677">Repeat</keyword>
<keyword id="KW-0832">Ubl conjugation</keyword>
<keyword id="KW-0862">Zinc</keyword>
<keyword id="KW-0863">Zinc-finger</keyword>
<proteinExistence type="evidence at protein level"/>
<feature type="chain" id="PRO_0000047224" description="Pogo transposable element with ZNF domain">
    <location>
        <begin position="1"/>
        <end position="1410"/>
    </location>
</feature>
<feature type="domain" description="HTH CENPB-type" evidence="3">
    <location>
        <begin position="1015"/>
        <end position="1085"/>
    </location>
</feature>
<feature type="domain" description="DDE-1" evidence="1">
    <location>
        <begin position="1117"/>
        <end position="1323"/>
    </location>
</feature>
<feature type="zinc finger region" description="C2H2-type 1; atypical" evidence="2">
    <location>
        <begin position="375"/>
        <end position="397"/>
    </location>
</feature>
<feature type="zinc finger region" description="C2H2-type 2" evidence="2">
    <location>
        <begin position="494"/>
        <end position="516"/>
    </location>
</feature>
<feature type="zinc finger region" description="C2H2-type 3" evidence="2">
    <location>
        <begin position="530"/>
        <end position="553"/>
    </location>
</feature>
<feature type="zinc finger region" description="C2H2-type 4" evidence="2">
    <location>
        <begin position="560"/>
        <end position="583"/>
    </location>
</feature>
<feature type="zinc finger region" description="C2H2-type 5" evidence="2">
    <location>
        <begin position="590"/>
        <end position="613"/>
    </location>
</feature>
<feature type="zinc finger region" description="C2H2-type 6" evidence="2">
    <location>
        <begin position="619"/>
        <end position="641"/>
    </location>
</feature>
<feature type="zinc finger region" description="C2H2-type 7" evidence="2">
    <location>
        <begin position="647"/>
        <end position="670"/>
    </location>
</feature>
<feature type="zinc finger region" description="C2H2-type 8" evidence="2">
    <location>
        <begin position="771"/>
        <end position="794"/>
    </location>
</feature>
<feature type="zinc finger region" description="C2H2-type 9" evidence="2">
    <location>
        <begin position="815"/>
        <end position="840"/>
    </location>
</feature>
<feature type="region of interest" description="Disordered" evidence="4">
    <location>
        <begin position="238"/>
        <end position="291"/>
    </location>
</feature>
<feature type="region of interest" description="Disordered" evidence="4">
    <location>
        <begin position="332"/>
        <end position="361"/>
    </location>
</feature>
<feature type="region of interest" description="Disordered" evidence="4">
    <location>
        <begin position="409"/>
        <end position="456"/>
    </location>
</feature>
<feature type="region of interest" description="Disordered" evidence="4">
    <location>
        <begin position="693"/>
        <end position="715"/>
    </location>
</feature>
<feature type="region of interest" description="Required for interaction with CBX5">
    <location>
        <begin position="810"/>
        <end position="850"/>
    </location>
</feature>
<feature type="region of interest" description="Disordered" evidence="4">
    <location>
        <begin position="857"/>
        <end position="927"/>
    </location>
</feature>
<feature type="region of interest" description="Disordered" evidence="4">
    <location>
        <begin position="942"/>
        <end position="969"/>
    </location>
</feature>
<feature type="region of interest" description="Disordered" evidence="4">
    <location>
        <begin position="1360"/>
        <end position="1400"/>
    </location>
</feature>
<feature type="coiled-coil region" evidence="1">
    <location>
        <begin position="1340"/>
        <end position="1360"/>
    </location>
</feature>
<feature type="short sequence motif" description="Integrase domain-binding motif (IBM)" evidence="14">
    <location>
        <begin position="1380"/>
        <end position="1404"/>
    </location>
</feature>
<feature type="compositionally biased region" description="Low complexity" evidence="4">
    <location>
        <begin position="239"/>
        <end position="266"/>
    </location>
</feature>
<feature type="compositionally biased region" description="Polar residues" evidence="4">
    <location>
        <begin position="267"/>
        <end position="284"/>
    </location>
</feature>
<feature type="compositionally biased region" description="Polar residues" evidence="4">
    <location>
        <begin position="345"/>
        <end position="361"/>
    </location>
</feature>
<feature type="compositionally biased region" description="Polar residues" evidence="4">
    <location>
        <begin position="701"/>
        <end position="710"/>
    </location>
</feature>
<feature type="compositionally biased region" description="Basic and acidic residues" evidence="4">
    <location>
        <begin position="860"/>
        <end position="870"/>
    </location>
</feature>
<feature type="compositionally biased region" description="Low complexity" evidence="4">
    <location>
        <begin position="892"/>
        <end position="915"/>
    </location>
</feature>
<feature type="modified residue" description="Phosphoserine" evidence="21 25">
    <location>
        <position position="333"/>
    </location>
</feature>
<feature type="modified residue" description="Phosphoserine" evidence="25">
    <location>
        <position position="363"/>
    </location>
</feature>
<feature type="modified residue" description="Phosphoserine" evidence="21 23 24 25 26">
    <location>
        <position position="425"/>
    </location>
</feature>
<feature type="modified residue" description="Phosphothreonine" evidence="22">
    <location>
        <position position="439"/>
    </location>
</feature>
<feature type="modified residue" description="Phosphoserine" evidence="22 25 26">
    <location>
        <position position="445"/>
    </location>
</feature>
<feature type="modified residue" description="Phosphothreonine" evidence="26">
    <location>
        <position position="463"/>
    </location>
</feature>
<feature type="modified residue" description="Phosphoserine" evidence="25">
    <location>
        <position position="856"/>
    </location>
</feature>
<feature type="modified residue" description="Phosphoserine" evidence="21 25">
    <location>
        <position position="1338"/>
    </location>
</feature>
<feature type="modified residue" description="Phosphoserine" evidence="25 26">
    <location>
        <position position="1364"/>
    </location>
</feature>
<feature type="modified residue" description="Phosphoserine" evidence="25">
    <location>
        <position position="1367"/>
    </location>
</feature>
<feature type="modified residue" description="Phosphothreonine" evidence="25">
    <location>
        <position position="1368"/>
    </location>
</feature>
<feature type="modified residue" description="Phosphoserine" evidence="14">
    <location>
        <position position="1373"/>
    </location>
</feature>
<feature type="modified residue" description="Phosphoserine" evidence="14">
    <location>
        <position position="1374"/>
    </location>
</feature>
<feature type="modified residue" description="Phosphothreonine" evidence="14">
    <location>
        <position position="1378"/>
    </location>
</feature>
<feature type="modified residue" description="Phosphoserine; by CK2" evidence="14 26">
    <location>
        <position position="1392"/>
    </location>
</feature>
<feature type="modified residue" description="Phosphothreonine" evidence="14">
    <location>
        <position position="1394"/>
    </location>
</feature>
<feature type="modified residue" description="Phosphoserine; by CK2" evidence="14">
    <location>
        <position position="1396"/>
    </location>
</feature>
<feature type="cross-link" description="Glycyl lysine isopeptide (Lys-Gly) (interchain with G-Cter in SUMO2)" evidence="27">
    <location>
        <position position="319"/>
    </location>
</feature>
<feature type="cross-link" description="Glycyl lysine isopeptide (Lys-Gly) (interchain with G-Cter in SUMO2)" evidence="27">
    <location>
        <position position="359"/>
    </location>
</feature>
<feature type="cross-link" description="Glycyl lysine isopeptide (Lys-Gly) (interchain with G-Cter in SUMO2)" evidence="27">
    <location>
        <position position="422"/>
    </location>
</feature>
<feature type="cross-link" description="Glycyl lysine isopeptide (Lys-Gly) (interchain with G-Cter in SUMO2)" evidence="27">
    <location>
        <position position="449"/>
    </location>
</feature>
<feature type="cross-link" description="Glycyl lysine isopeptide (Lys-Gly) (interchain with G-Cter in SUMO2)" evidence="27">
    <location>
        <position position="489"/>
    </location>
</feature>
<feature type="cross-link" description="Glycyl lysine isopeptide (Lys-Gly) (interchain with G-Cter in SUMO2)" evidence="27">
    <location>
        <position position="629"/>
    </location>
</feature>
<feature type="cross-link" description="Glycyl lysine isopeptide (Lys-Gly) (interchain with G-Cter in SUMO2)" evidence="27">
    <location>
        <position position="677"/>
    </location>
</feature>
<feature type="cross-link" description="Glycyl lysine isopeptide (Lys-Gly) (interchain with G-Cter in SUMO2)" evidence="27">
    <location>
        <position position="801"/>
    </location>
</feature>
<feature type="cross-link" description="Glycyl lysine isopeptide (Lys-Gly) (interchain with G-Cter in SUMO2)" evidence="27">
    <location>
        <position position="883"/>
    </location>
</feature>
<feature type="splice variant" id="VSP_010185" description="In isoform 2, isoform 3 and isoform 7." evidence="15 16 18">
    <location>
        <begin position="42"/>
        <end position="94"/>
    </location>
</feature>
<feature type="splice variant" id="VSP_030150" description="In isoform 5." evidence="19">
    <location>
        <begin position="96"/>
        <end position="190"/>
    </location>
</feature>
<feature type="splice variant" id="VSP_046785" description="In isoform 6 and isoform 7." evidence="16">
    <location>
        <begin position="287"/>
        <end position="295"/>
    </location>
</feature>
<feature type="splice variant" id="VSP_010187" description="In isoform 4." evidence="17">
    <original>VTSS</original>
    <variation>GTIT</variation>
    <location>
        <begin position="360"/>
        <end position="363"/>
    </location>
</feature>
<feature type="splice variant" id="VSP_010188" description="In isoform 4." evidence="17">
    <location>
        <begin position="364"/>
        <end position="1410"/>
    </location>
</feature>
<feature type="splice variant" id="VSP_010186" description="In isoform 3." evidence="15">
    <original>Q</original>
    <variation>QPYFPSYVTQ</variation>
    <location>
        <position position="593"/>
    </location>
</feature>
<feature type="sequence variant" id="VAR_073179" description="Found in patients with ASD; uncertain significance." evidence="11">
    <original>E</original>
    <variation>K</variation>
    <location>
        <position position="1040"/>
    </location>
</feature>
<feature type="sequence variant" id="VAR_031476" description="In dbSNP:rs35198305.">
    <original>E</original>
    <variation>D</variation>
    <location>
        <position position="1365"/>
    </location>
</feature>
<feature type="mutagenesis site" description="Diminishes interaction with CBX5 and abolishes interaction with CBX1 and CBX5; when associated with A-820; A-833 and A-840." evidence="7">
    <original>C</original>
    <variation>A</variation>
    <location>
        <position position="817"/>
    </location>
</feature>
<feature type="mutagenesis site" description="Abolishes interaction with CBX1, CBX3 and CBX5; when associated with when associated with A-817; A-833 and A-840." evidence="7">
    <original>C</original>
    <variation>A</variation>
    <location>
        <position position="820"/>
    </location>
</feature>
<feature type="mutagenesis site" description="Abolishes interaction with CBX1, CBX3 and CBX5; when associated with A-817; A-820 and A-840." evidence="7">
    <original>H</original>
    <variation>A</variation>
    <location>
        <position position="833"/>
    </location>
</feature>
<feature type="mutagenesis site" description="Abolishes interaction with CBX1, CBX3 and CBX5; when associated with A-817; A-820 and A-833." evidence="7">
    <original>H</original>
    <variation>A</variation>
    <location>
        <position position="840"/>
    </location>
</feature>
<feature type="mutagenesis site" description="Loss of phosphorylation. Loss of interaction with PSIP1; when associated with A-1396." evidence="14">
    <original>S</original>
    <variation>A</variation>
    <location>
        <position position="1392"/>
    </location>
</feature>
<feature type="mutagenesis site" description="Phosphomimetic mutant. Significant increase in interaction with PSIP1; when associated with D-1396." evidence="14">
    <original>S</original>
    <variation>D</variation>
    <location>
        <position position="1392"/>
    </location>
</feature>
<feature type="mutagenesis site" description="Loss of phosphorylation. Loss of interaction with PSIP1; when associated with A-1392." evidence="14">
    <original>S</original>
    <variation>A</variation>
    <location>
        <position position="1396"/>
    </location>
</feature>
<feature type="mutagenesis site" description="Phosphomimetic mutant. Significant increase in interaction with PSIP1; when associated with D-1392." evidence="14">
    <original>S</original>
    <variation>D</variation>
    <location>
        <position position="1396"/>
    </location>
</feature>
<feature type="sequence conflict" description="In Ref. 2; BAG63781." evidence="19" ref="2">
    <original>R</original>
    <variation>G</variation>
    <location>
        <position position="213"/>
    </location>
</feature>
<feature type="sequence conflict" description="In Ref. 2; BAG62060." evidence="19" ref="2">
    <original>I</original>
    <variation>F</variation>
    <location>
        <position position="327"/>
    </location>
</feature>
<feature type="sequence conflict" description="In Ref. 5; BAB87117/BAE45744." evidence="19" ref="5">
    <original>L</original>
    <variation>P</variation>
    <location>
        <position position="503"/>
    </location>
</feature>
<feature type="sequence conflict" description="In Ref. 2; BAG63781." evidence="19" ref="2">
    <original>V</original>
    <variation>A</variation>
    <location>
        <position position="727"/>
    </location>
</feature>
<feature type="sequence conflict" description="In Ref. 6; CAB45136." evidence="19" ref="6">
    <original>N</original>
    <variation>T</variation>
    <location>
        <position position="788"/>
    </location>
</feature>
<feature type="sequence conflict" description="In Ref. 5; BAB87117/BAE45744." evidence="19" ref="5">
    <original>K</original>
    <variation>E</variation>
    <location>
        <position position="888"/>
    </location>
</feature>
<feature type="sequence conflict" description="In Ref. 1; CAD97850." evidence="19" ref="1">
    <original>A</original>
    <variation>V</variation>
    <location>
        <position position="933"/>
    </location>
</feature>
<feature type="sequence conflict" description="In Ref. 1; CAD97850." evidence="19" ref="1">
    <original>E</original>
    <variation>G</variation>
    <location>
        <position position="1026"/>
    </location>
</feature>
<feature type="sequence conflict" description="In Ref. 5; BAB87117/BAE45744." evidence="19" ref="5">
    <original>R</original>
    <variation>W</variation>
    <location>
        <position position="1078"/>
    </location>
</feature>
<feature type="sequence conflict" description="In Ref. 5; BAB87117/BAE45744." evidence="19" ref="5">
    <original>TLPKDVAENAGLFIDF</original>
    <variation>PTLLFCLFVFSSPSTL</variation>
    <location>
        <begin position="1092"/>
        <end position="1107"/>
    </location>
</feature>
<feature type="sequence conflict" description="In Ref. 2; BAG63781." evidence="19" ref="2">
    <original>T</original>
    <variation>A</variation>
    <location>
        <position position="1248"/>
    </location>
</feature>
<feature type="sequence conflict" description="In Ref. 1; CAD97850." evidence="19" ref="1">
    <original>W</original>
    <variation>R</variation>
    <location>
        <position position="1304"/>
    </location>
</feature>
<feature type="turn" evidence="28">
    <location>
        <begin position="378"/>
        <end position="380"/>
    </location>
</feature>
<feature type="helix" evidence="28">
    <location>
        <begin position="387"/>
        <end position="397"/>
    </location>
</feature>
<feature type="turn" evidence="28">
    <location>
        <begin position="399"/>
        <end position="401"/>
    </location>
</feature>
<feature type="helix" evidence="29">
    <location>
        <begin position="1382"/>
        <end position="1388"/>
    </location>
</feature>
<gene>
    <name type="primary">POGZ</name>
    <name type="synonym">KIAA0461</name>
    <name type="synonym">SUHW5</name>
    <name type="synonym">ZNF280E</name>
    <name type="synonym">ZNF635</name>
    <name type="ORF">Nbla00003</name>
</gene>
<reference key="1">
    <citation type="journal article" date="2007" name="BMC Genomics">
        <title>The full-ORF clone resource of the German cDNA consortium.</title>
        <authorList>
            <person name="Bechtel S."/>
            <person name="Rosenfelder H."/>
            <person name="Duda A."/>
            <person name="Schmidt C.P."/>
            <person name="Ernst U."/>
            <person name="Wellenreuther R."/>
            <person name="Mehrle A."/>
            <person name="Schuster C."/>
            <person name="Bahr A."/>
            <person name="Bloecker H."/>
            <person name="Heubner D."/>
            <person name="Hoerlein A."/>
            <person name="Michel G."/>
            <person name="Wedler H."/>
            <person name="Koehrer K."/>
            <person name="Ottenwaelder B."/>
            <person name="Poustka A."/>
            <person name="Wiemann S."/>
            <person name="Schupp I."/>
        </authorList>
    </citation>
    <scope>NUCLEOTIDE SEQUENCE [LARGE SCALE MRNA] (ISOFORM 1)</scope>
    <source>
        <tissue>Retina</tissue>
    </source>
</reference>
<reference key="2">
    <citation type="journal article" date="2004" name="Nat. Genet.">
        <title>Complete sequencing and characterization of 21,243 full-length human cDNAs.</title>
        <authorList>
            <person name="Ota T."/>
            <person name="Suzuki Y."/>
            <person name="Nishikawa T."/>
            <person name="Otsuki T."/>
            <person name="Sugiyama T."/>
            <person name="Irie R."/>
            <person name="Wakamatsu A."/>
            <person name="Hayashi K."/>
            <person name="Sato H."/>
            <person name="Nagai K."/>
            <person name="Kimura K."/>
            <person name="Makita H."/>
            <person name="Sekine M."/>
            <person name="Obayashi M."/>
            <person name="Nishi T."/>
            <person name="Shibahara T."/>
            <person name="Tanaka T."/>
            <person name="Ishii S."/>
            <person name="Yamamoto J."/>
            <person name="Saito K."/>
            <person name="Kawai Y."/>
            <person name="Isono Y."/>
            <person name="Nakamura Y."/>
            <person name="Nagahari K."/>
            <person name="Murakami K."/>
            <person name="Yasuda T."/>
            <person name="Iwayanagi T."/>
            <person name="Wagatsuma M."/>
            <person name="Shiratori A."/>
            <person name="Sudo H."/>
            <person name="Hosoiri T."/>
            <person name="Kaku Y."/>
            <person name="Kodaira H."/>
            <person name="Kondo H."/>
            <person name="Sugawara M."/>
            <person name="Takahashi M."/>
            <person name="Kanda K."/>
            <person name="Yokoi T."/>
            <person name="Furuya T."/>
            <person name="Kikkawa E."/>
            <person name="Omura Y."/>
            <person name="Abe K."/>
            <person name="Kamihara K."/>
            <person name="Katsuta N."/>
            <person name="Sato K."/>
            <person name="Tanikawa M."/>
            <person name="Yamazaki M."/>
            <person name="Ninomiya K."/>
            <person name="Ishibashi T."/>
            <person name="Yamashita H."/>
            <person name="Murakawa K."/>
            <person name="Fujimori K."/>
            <person name="Tanai H."/>
            <person name="Kimata M."/>
            <person name="Watanabe M."/>
            <person name="Hiraoka S."/>
            <person name="Chiba Y."/>
            <person name="Ishida S."/>
            <person name="Ono Y."/>
            <person name="Takiguchi S."/>
            <person name="Watanabe S."/>
            <person name="Yosida M."/>
            <person name="Hotuta T."/>
            <person name="Kusano J."/>
            <person name="Kanehori K."/>
            <person name="Takahashi-Fujii A."/>
            <person name="Hara H."/>
            <person name="Tanase T.-O."/>
            <person name="Nomura Y."/>
            <person name="Togiya S."/>
            <person name="Komai F."/>
            <person name="Hara R."/>
            <person name="Takeuchi K."/>
            <person name="Arita M."/>
            <person name="Imose N."/>
            <person name="Musashino K."/>
            <person name="Yuuki H."/>
            <person name="Oshima A."/>
            <person name="Sasaki N."/>
            <person name="Aotsuka S."/>
            <person name="Yoshikawa Y."/>
            <person name="Matsunawa H."/>
            <person name="Ichihara T."/>
            <person name="Shiohata N."/>
            <person name="Sano S."/>
            <person name="Moriya S."/>
            <person name="Momiyama H."/>
            <person name="Satoh N."/>
            <person name="Takami S."/>
            <person name="Terashima Y."/>
            <person name="Suzuki O."/>
            <person name="Nakagawa S."/>
            <person name="Senoh A."/>
            <person name="Mizoguchi H."/>
            <person name="Goto Y."/>
            <person name="Shimizu F."/>
            <person name="Wakebe H."/>
            <person name="Hishigaki H."/>
            <person name="Watanabe T."/>
            <person name="Sugiyama A."/>
            <person name="Takemoto M."/>
            <person name="Kawakami B."/>
            <person name="Yamazaki M."/>
            <person name="Watanabe K."/>
            <person name="Kumagai A."/>
            <person name="Itakura S."/>
            <person name="Fukuzumi Y."/>
            <person name="Fujimori Y."/>
            <person name="Komiyama M."/>
            <person name="Tashiro H."/>
            <person name="Tanigami A."/>
            <person name="Fujiwara T."/>
            <person name="Ono T."/>
            <person name="Yamada K."/>
            <person name="Fujii Y."/>
            <person name="Ozaki K."/>
            <person name="Hirao M."/>
            <person name="Ohmori Y."/>
            <person name="Kawabata A."/>
            <person name="Hikiji T."/>
            <person name="Kobatake N."/>
            <person name="Inagaki H."/>
            <person name="Ikema Y."/>
            <person name="Okamoto S."/>
            <person name="Okitani R."/>
            <person name="Kawakami T."/>
            <person name="Noguchi S."/>
            <person name="Itoh T."/>
            <person name="Shigeta K."/>
            <person name="Senba T."/>
            <person name="Matsumura K."/>
            <person name="Nakajima Y."/>
            <person name="Mizuno T."/>
            <person name="Morinaga M."/>
            <person name="Sasaki M."/>
            <person name="Togashi T."/>
            <person name="Oyama M."/>
            <person name="Hata H."/>
            <person name="Watanabe M."/>
            <person name="Komatsu T."/>
            <person name="Mizushima-Sugano J."/>
            <person name="Satoh T."/>
            <person name="Shirai Y."/>
            <person name="Takahashi Y."/>
            <person name="Nakagawa K."/>
            <person name="Okumura K."/>
            <person name="Nagase T."/>
            <person name="Nomura N."/>
            <person name="Kikuchi H."/>
            <person name="Masuho Y."/>
            <person name="Yamashita R."/>
            <person name="Nakai K."/>
            <person name="Yada T."/>
            <person name="Nakamura Y."/>
            <person name="Ohara O."/>
            <person name="Isogai T."/>
            <person name="Sugano S."/>
        </authorList>
    </citation>
    <scope>NUCLEOTIDE SEQUENCE [LARGE SCALE MRNA] (ISOFORMS 6 AND 7)</scope>
    <source>
        <tissue>Placenta</tissue>
        <tissue>Testis</tissue>
    </source>
</reference>
<reference key="3">
    <citation type="journal article" date="2006" name="Nature">
        <title>The DNA sequence and biological annotation of human chromosome 1.</title>
        <authorList>
            <person name="Gregory S.G."/>
            <person name="Barlow K.F."/>
            <person name="McLay K.E."/>
            <person name="Kaul R."/>
            <person name="Swarbreck D."/>
            <person name="Dunham A."/>
            <person name="Scott C.E."/>
            <person name="Howe K.L."/>
            <person name="Woodfine K."/>
            <person name="Spencer C.C.A."/>
            <person name="Jones M.C."/>
            <person name="Gillson C."/>
            <person name="Searle S."/>
            <person name="Zhou Y."/>
            <person name="Kokocinski F."/>
            <person name="McDonald L."/>
            <person name="Evans R."/>
            <person name="Phillips K."/>
            <person name="Atkinson A."/>
            <person name="Cooper R."/>
            <person name="Jones C."/>
            <person name="Hall R.E."/>
            <person name="Andrews T.D."/>
            <person name="Lloyd C."/>
            <person name="Ainscough R."/>
            <person name="Almeida J.P."/>
            <person name="Ambrose K.D."/>
            <person name="Anderson F."/>
            <person name="Andrew R.W."/>
            <person name="Ashwell R.I.S."/>
            <person name="Aubin K."/>
            <person name="Babbage A.K."/>
            <person name="Bagguley C.L."/>
            <person name="Bailey J."/>
            <person name="Beasley H."/>
            <person name="Bethel G."/>
            <person name="Bird C.P."/>
            <person name="Bray-Allen S."/>
            <person name="Brown J.Y."/>
            <person name="Brown A.J."/>
            <person name="Buckley D."/>
            <person name="Burton J."/>
            <person name="Bye J."/>
            <person name="Carder C."/>
            <person name="Chapman J.C."/>
            <person name="Clark S.Y."/>
            <person name="Clarke G."/>
            <person name="Clee C."/>
            <person name="Cobley V."/>
            <person name="Collier R.E."/>
            <person name="Corby N."/>
            <person name="Coville G.J."/>
            <person name="Davies J."/>
            <person name="Deadman R."/>
            <person name="Dunn M."/>
            <person name="Earthrowl M."/>
            <person name="Ellington A.G."/>
            <person name="Errington H."/>
            <person name="Frankish A."/>
            <person name="Frankland J."/>
            <person name="French L."/>
            <person name="Garner P."/>
            <person name="Garnett J."/>
            <person name="Gay L."/>
            <person name="Ghori M.R.J."/>
            <person name="Gibson R."/>
            <person name="Gilby L.M."/>
            <person name="Gillett W."/>
            <person name="Glithero R.J."/>
            <person name="Grafham D.V."/>
            <person name="Griffiths C."/>
            <person name="Griffiths-Jones S."/>
            <person name="Grocock R."/>
            <person name="Hammond S."/>
            <person name="Harrison E.S.I."/>
            <person name="Hart E."/>
            <person name="Haugen E."/>
            <person name="Heath P.D."/>
            <person name="Holmes S."/>
            <person name="Holt K."/>
            <person name="Howden P.J."/>
            <person name="Hunt A.R."/>
            <person name="Hunt S.E."/>
            <person name="Hunter G."/>
            <person name="Isherwood J."/>
            <person name="James R."/>
            <person name="Johnson C."/>
            <person name="Johnson D."/>
            <person name="Joy A."/>
            <person name="Kay M."/>
            <person name="Kershaw J.K."/>
            <person name="Kibukawa M."/>
            <person name="Kimberley A.M."/>
            <person name="King A."/>
            <person name="Knights A.J."/>
            <person name="Lad H."/>
            <person name="Laird G."/>
            <person name="Lawlor S."/>
            <person name="Leongamornlert D.A."/>
            <person name="Lloyd D.M."/>
            <person name="Loveland J."/>
            <person name="Lovell J."/>
            <person name="Lush M.J."/>
            <person name="Lyne R."/>
            <person name="Martin S."/>
            <person name="Mashreghi-Mohammadi M."/>
            <person name="Matthews L."/>
            <person name="Matthews N.S.W."/>
            <person name="McLaren S."/>
            <person name="Milne S."/>
            <person name="Mistry S."/>
            <person name="Moore M.J.F."/>
            <person name="Nickerson T."/>
            <person name="O'Dell C.N."/>
            <person name="Oliver K."/>
            <person name="Palmeiri A."/>
            <person name="Palmer S.A."/>
            <person name="Parker A."/>
            <person name="Patel D."/>
            <person name="Pearce A.V."/>
            <person name="Peck A.I."/>
            <person name="Pelan S."/>
            <person name="Phelps K."/>
            <person name="Phillimore B.J."/>
            <person name="Plumb R."/>
            <person name="Rajan J."/>
            <person name="Raymond C."/>
            <person name="Rouse G."/>
            <person name="Saenphimmachak C."/>
            <person name="Sehra H.K."/>
            <person name="Sheridan E."/>
            <person name="Shownkeen R."/>
            <person name="Sims S."/>
            <person name="Skuce C.D."/>
            <person name="Smith M."/>
            <person name="Steward C."/>
            <person name="Subramanian S."/>
            <person name="Sycamore N."/>
            <person name="Tracey A."/>
            <person name="Tromans A."/>
            <person name="Van Helmond Z."/>
            <person name="Wall M."/>
            <person name="Wallis J.M."/>
            <person name="White S."/>
            <person name="Whitehead S.L."/>
            <person name="Wilkinson J.E."/>
            <person name="Willey D.L."/>
            <person name="Williams H."/>
            <person name="Wilming L."/>
            <person name="Wray P.W."/>
            <person name="Wu Z."/>
            <person name="Coulson A."/>
            <person name="Vaudin M."/>
            <person name="Sulston J.E."/>
            <person name="Durbin R.M."/>
            <person name="Hubbard T."/>
            <person name="Wooster R."/>
            <person name="Dunham I."/>
            <person name="Carter N.P."/>
            <person name="McVean G."/>
            <person name="Ross M.T."/>
            <person name="Harrow J."/>
            <person name="Olson M.V."/>
            <person name="Beck S."/>
            <person name="Rogers J."/>
            <person name="Bentley D.R."/>
        </authorList>
    </citation>
    <scope>NUCLEOTIDE SEQUENCE [LARGE SCALE GENOMIC DNA]</scope>
</reference>
<reference key="4">
    <citation type="submission" date="2005-09" db="EMBL/GenBank/DDBJ databases">
        <authorList>
            <person name="Mural R.J."/>
            <person name="Istrail S."/>
            <person name="Sutton G.G."/>
            <person name="Florea L."/>
            <person name="Halpern A.L."/>
            <person name="Mobarry C.M."/>
            <person name="Lippert R."/>
            <person name="Walenz B."/>
            <person name="Shatkay H."/>
            <person name="Dew I."/>
            <person name="Miller J.R."/>
            <person name="Flanigan M.J."/>
            <person name="Edwards N.J."/>
            <person name="Bolanos R."/>
            <person name="Fasulo D."/>
            <person name="Halldorsson B.V."/>
            <person name="Hannenhalli S."/>
            <person name="Turner R."/>
            <person name="Yooseph S."/>
            <person name="Lu F."/>
            <person name="Nusskern D.R."/>
            <person name="Shue B.C."/>
            <person name="Zheng X.H."/>
            <person name="Zhong F."/>
            <person name="Delcher A.L."/>
            <person name="Huson D.H."/>
            <person name="Kravitz S.A."/>
            <person name="Mouchard L."/>
            <person name="Reinert K."/>
            <person name="Remington K.A."/>
            <person name="Clark A.G."/>
            <person name="Waterman M.S."/>
            <person name="Eichler E.E."/>
            <person name="Adams M.D."/>
            <person name="Hunkapiller M.W."/>
            <person name="Myers E.W."/>
            <person name="Venter J.C."/>
        </authorList>
    </citation>
    <scope>NUCLEOTIDE SEQUENCE [LARGE SCALE GENOMIC DNA]</scope>
</reference>
<reference key="5">
    <citation type="journal article" date="2003" name="Cancer Lett.">
        <title>Neuroblastoma oligo-capping cDNA project: toward the understanding of the genesis and biology of neuroblastoma.</title>
        <authorList>
            <person name="Ohira M."/>
            <person name="Morohashi A."/>
            <person name="Nakamura Y."/>
            <person name="Isogai E."/>
            <person name="Furuya K."/>
            <person name="Hamano S."/>
            <person name="Machida T."/>
            <person name="Aoyama M."/>
            <person name="Fukumura M."/>
            <person name="Miyazaki K."/>
            <person name="Suzuki Y."/>
            <person name="Sugano S."/>
            <person name="Hirato J."/>
            <person name="Nakagawara A."/>
        </authorList>
    </citation>
    <scope>NUCLEOTIDE SEQUENCE [LARGE SCALE MRNA] OF 1-1107 (ISOFORM 3)</scope>
    <source>
        <tissue>Neuroblastoma</tissue>
    </source>
</reference>
<reference key="6">
    <citation type="journal article" date="2000" name="Mol. Cell. Biochem.">
        <title>A set of proteins interacting with transcription factor Sp1 identified in a two-hybrid screening.</title>
        <authorList>
            <person name="Gunther M."/>
            <person name="Laithier M."/>
            <person name="Brison O."/>
        </authorList>
    </citation>
    <scope>NUCLEOTIDE SEQUENCE [MRNA] OF 1-788 (ISOFORM 1)</scope>
    <scope>INTERACTION WITH SP1</scope>
    <source>
        <tissue>Colon</tissue>
    </source>
</reference>
<reference key="7">
    <citation type="journal article" date="2004" name="Genome Res.">
        <title>The status, quality, and expansion of the NIH full-length cDNA project: the Mammalian Gene Collection (MGC).</title>
        <authorList>
            <consortium name="The MGC Project Team"/>
        </authorList>
    </citation>
    <scope>NUCLEOTIDE SEQUENCE [LARGE SCALE MRNA] OF 1-363 (ISOFORM 4)</scope>
    <source>
        <tissue>Placenta</tissue>
    </source>
</reference>
<reference key="8">
    <citation type="journal article" date="1997" name="DNA Res.">
        <title>Characterization of cDNA clones in size-fractionated cDNA libraries from human brain.</title>
        <authorList>
            <person name="Seki N."/>
            <person name="Ohira M."/>
            <person name="Nagase T."/>
            <person name="Ishikawa K."/>
            <person name="Miyajima N."/>
            <person name="Nakajima D."/>
            <person name="Nomura N."/>
            <person name="Ohara O."/>
        </authorList>
    </citation>
    <scope>NUCLEOTIDE SEQUENCE [LARGE SCALE MRNA] OF 3-1410 (ISOFORM 2)</scope>
    <source>
        <tissue>Brain</tissue>
    </source>
</reference>
<reference key="9">
    <citation type="journal article" date="2008" name="Proc. Natl. Acad. Sci. U.S.A.">
        <title>A quantitative atlas of mitotic phosphorylation.</title>
        <authorList>
            <person name="Dephoure N."/>
            <person name="Zhou C."/>
            <person name="Villen J."/>
            <person name="Beausoleil S.A."/>
            <person name="Bakalarski C.E."/>
            <person name="Elledge S.J."/>
            <person name="Gygi S.P."/>
        </authorList>
    </citation>
    <scope>PHOSPHORYLATION [LARGE SCALE ANALYSIS] AT SER-333; SER-425 AND SER-1338</scope>
    <scope>IDENTIFICATION BY MASS SPECTROMETRY [LARGE SCALE ANALYSIS]</scope>
    <source>
        <tissue>Cervix carcinoma</tissue>
    </source>
</reference>
<reference key="10">
    <citation type="journal article" date="2009" name="Anal. Chem.">
        <title>Lys-N and trypsin cover complementary parts of the phosphoproteome in a refined SCX-based approach.</title>
        <authorList>
            <person name="Gauci S."/>
            <person name="Helbig A.O."/>
            <person name="Slijper M."/>
            <person name="Krijgsveld J."/>
            <person name="Heck A.J."/>
            <person name="Mohammed S."/>
        </authorList>
    </citation>
    <scope>IDENTIFICATION BY MASS SPECTROMETRY [LARGE SCALE ANALYSIS]</scope>
</reference>
<reference key="11">
    <citation type="journal article" date="2009" name="J. Biol. Chem.">
        <title>Lens epithelium-derived growth factor/p75 interacts with the transposase-derived DDE domain of PogZ.</title>
        <authorList>
            <person name="Bartholomeeusen K."/>
            <person name="Christ F."/>
            <person name="Hendrix J."/>
            <person name="Rain J.C."/>
            <person name="Emiliani S."/>
            <person name="Benarous R."/>
            <person name="Debyser Z."/>
            <person name="Gijsbers R."/>
            <person name="De Rijck J."/>
        </authorList>
    </citation>
    <scope>SUBCELLULAR LOCATION</scope>
    <scope>INTERACTION WITH PSIP1</scope>
</reference>
<reference key="12">
    <citation type="journal article" date="2009" name="Sci. Signal.">
        <title>Quantitative phosphoproteomic analysis of T cell receptor signaling reveals system-wide modulation of protein-protein interactions.</title>
        <authorList>
            <person name="Mayya V."/>
            <person name="Lundgren D.H."/>
            <person name="Hwang S.-I."/>
            <person name="Rezaul K."/>
            <person name="Wu L."/>
            <person name="Eng J.K."/>
            <person name="Rodionov V."/>
            <person name="Han D.K."/>
        </authorList>
    </citation>
    <scope>PHOSPHORYLATION [LARGE SCALE ANALYSIS] AT THR-439 AND SER-445</scope>
    <scope>IDENTIFICATION BY MASS SPECTROMETRY [LARGE SCALE ANALYSIS]</scope>
    <source>
        <tissue>Leukemic T-cell</tissue>
    </source>
</reference>
<reference key="13">
    <citation type="journal article" date="2010" name="Cell">
        <title>Quantitative interaction proteomics and genome-wide profiling of epigenetic histone marks and their readers.</title>
        <authorList>
            <person name="Vermeulen M."/>
            <person name="Eberl H.C."/>
            <person name="Matarese F."/>
            <person name="Marks H."/>
            <person name="Denissov S."/>
            <person name="Butter F."/>
            <person name="Lee K.K."/>
            <person name="Olsen J.V."/>
            <person name="Hyman A.A."/>
            <person name="Stunnenberg H.G."/>
            <person name="Mann M."/>
        </authorList>
    </citation>
    <scope>SUBCELLULAR LOCATION</scope>
    <scope>INTERACTION WITH CHAMP1; MAD2L2; CBX1; CBX3 AND CBX5</scope>
</reference>
<reference key="14">
    <citation type="journal article" date="2010" name="Nat. Cell Biol.">
        <title>Human POGZ modulates dissociation of HP1alpha from mitotic chromosome arms through Aurora B activation.</title>
        <authorList>
            <person name="Nozawa R.S."/>
            <person name="Nagao K."/>
            <person name="Masuda H.T."/>
            <person name="Iwasaki O."/>
            <person name="Hirota T."/>
            <person name="Nozaki N."/>
            <person name="Kimura H."/>
            <person name="Obuse C."/>
        </authorList>
    </citation>
    <scope>FUNCTION</scope>
    <scope>INTERACTION WITH CBX1; CBX3 AND CBX5</scope>
    <scope>SUBCELLULAR LOCATION</scope>
    <scope>MUTAGENESIS OF CYS-817; CYS-820; HIS-833 AND HIS-840</scope>
</reference>
<reference key="15">
    <citation type="journal article" date="2010" name="Sci. Signal.">
        <title>Quantitative phosphoproteomics reveals widespread full phosphorylation site occupancy during mitosis.</title>
        <authorList>
            <person name="Olsen J.V."/>
            <person name="Vermeulen M."/>
            <person name="Santamaria A."/>
            <person name="Kumar C."/>
            <person name="Miller M.L."/>
            <person name="Jensen L.J."/>
            <person name="Gnad F."/>
            <person name="Cox J."/>
            <person name="Jensen T.S."/>
            <person name="Nigg E.A."/>
            <person name="Brunak S."/>
            <person name="Mann M."/>
        </authorList>
    </citation>
    <scope>PHOSPHORYLATION [LARGE SCALE ANALYSIS] AT SER-425</scope>
    <scope>IDENTIFICATION BY MASS SPECTROMETRY [LARGE SCALE ANALYSIS]</scope>
    <source>
        <tissue>Cervix carcinoma</tissue>
    </source>
</reference>
<reference key="16">
    <citation type="journal article" date="2011" name="Sci. Signal.">
        <title>System-wide temporal characterization of the proteome and phosphoproteome of human embryonic stem cell differentiation.</title>
        <authorList>
            <person name="Rigbolt K.T."/>
            <person name="Prokhorova T.A."/>
            <person name="Akimov V."/>
            <person name="Henningsen J."/>
            <person name="Johansen P.T."/>
            <person name="Kratchmarova I."/>
            <person name="Kassem M."/>
            <person name="Mann M."/>
            <person name="Olsen J.V."/>
            <person name="Blagoev B."/>
        </authorList>
    </citation>
    <scope>PHOSPHORYLATION [LARGE SCALE ANALYSIS] AT SER-425</scope>
    <scope>IDENTIFICATION BY MASS SPECTROMETRY [LARGE SCALE ANALYSIS]</scope>
</reference>
<reference key="17">
    <citation type="journal article" date="2013" name="J. Proteome Res.">
        <title>Toward a comprehensive characterization of a human cancer cell phosphoproteome.</title>
        <authorList>
            <person name="Zhou H."/>
            <person name="Di Palma S."/>
            <person name="Preisinger C."/>
            <person name="Peng M."/>
            <person name="Polat A.N."/>
            <person name="Heck A.J."/>
            <person name="Mohammed S."/>
        </authorList>
    </citation>
    <scope>PHOSPHORYLATION [LARGE SCALE ANALYSIS] AT SER-333; SER-363; SER-425; SER-445; SER-856; SER-1338; SER-1364; SER-1367 AND THR-1368</scope>
    <scope>IDENTIFICATION BY MASS SPECTROMETRY [LARGE SCALE ANALYSIS]</scope>
    <source>
        <tissue>Cervix carcinoma</tissue>
        <tissue>Erythroleukemia</tissue>
    </source>
</reference>
<reference key="18">
    <citation type="journal article" date="2014" name="Cancer Res.">
        <title>Validation and structural characterization of the LEDGF/p75-MLL interface as a new target for the treatment of MLL-dependent leukemia.</title>
        <authorList>
            <person name="Cermakova K."/>
            <person name="Tesina P."/>
            <person name="Demeulemeester J."/>
            <person name="El Ashkar S."/>
            <person name="Mereau H."/>
            <person name="Schwaller J."/>
            <person name="Rezacova P."/>
            <person name="Veverka V."/>
            <person name="De Rijck J."/>
        </authorList>
    </citation>
    <scope>INTERACTION WITH PSIP1</scope>
</reference>
<reference key="19">
    <citation type="journal article" date="2014" name="J. Proteomics">
        <title>An enzyme assisted RP-RPLC approach for in-depth analysis of human liver phosphoproteome.</title>
        <authorList>
            <person name="Bian Y."/>
            <person name="Song C."/>
            <person name="Cheng K."/>
            <person name="Dong M."/>
            <person name="Wang F."/>
            <person name="Huang J."/>
            <person name="Sun D."/>
            <person name="Wang L."/>
            <person name="Ye M."/>
            <person name="Zou H."/>
        </authorList>
    </citation>
    <scope>PHOSPHORYLATION [LARGE SCALE ANALYSIS] AT SER-425; SER-445; THR-463; SER-1364 AND SER-1392</scope>
    <scope>IDENTIFICATION BY MASS SPECTROMETRY [LARGE SCALE ANALYSIS]</scope>
    <source>
        <tissue>Liver</tissue>
    </source>
</reference>
<reference key="20">
    <citation type="journal article" date="2015" name="Nature">
        <title>Large-scale discovery of novel genetic causes of developmental disorders.</title>
        <authorList>
            <consortium name="Deciphering Developmental Disorders Study"/>
        </authorList>
    </citation>
    <scope>INVOLVEMENT IN WHSUS</scope>
</reference>
<reference key="21">
    <citation type="journal article" date="2016" name="Genome Med.">
        <title>POGZ truncating alleles cause syndromic intellectual disability.</title>
        <authorList>
            <person name="White J."/>
            <person name="Beck C.R."/>
            <person name="Harel T."/>
            <person name="Posey J.E."/>
            <person name="Jhangiani S.N."/>
            <person name="Tang S."/>
            <person name="Farwell K.D."/>
            <person name="Powis Z."/>
            <person name="Mendelsohn N.J."/>
            <person name="Baker J.A."/>
            <person name="Pollack L."/>
            <person name="Mason K.J."/>
            <person name="Wierenga K.J."/>
            <person name="Arrington D.K."/>
            <person name="Hall M."/>
            <person name="Psychogios A."/>
            <person name="Fairbrother L."/>
            <person name="Walkiewicz M."/>
            <person name="Person R.E."/>
            <person name="Niu Z."/>
            <person name="Zhang J."/>
            <person name="Rosenfeld J.A."/>
            <person name="Muzny D.M."/>
            <person name="Eng C."/>
            <person name="Beaudet A.L."/>
            <person name="Lupski J.R."/>
            <person name="Boerwinkle E."/>
            <person name="Gibbs R.A."/>
            <person name="Yang Y."/>
            <person name="Xia F."/>
            <person name="Sutton V.R."/>
        </authorList>
    </citation>
    <scope>INVOLVEMENT IN WHSUS</scope>
</reference>
<reference key="22">
    <citation type="journal article" date="2017" name="Nat. Struct. Mol. Biol.">
        <title>Site-specific mapping of the human SUMO proteome reveals co-modification with phosphorylation.</title>
        <authorList>
            <person name="Hendriks I.A."/>
            <person name="Lyon D."/>
            <person name="Young C."/>
            <person name="Jensen L.J."/>
            <person name="Vertegaal A.C."/>
            <person name="Nielsen M.L."/>
        </authorList>
    </citation>
    <scope>SUMOYLATION [LARGE SCALE ANALYSIS] AT LYS-319; LYS-359; LYS-422; LYS-449; LYS-489; LYS-629; LYS-677; LYS-801 AND LYS-883</scope>
    <scope>IDENTIFICATION BY MASS SPECTROMETRY [LARGE SCALE ANALYSIS]</scope>
</reference>
<reference key="23">
    <citation type="journal article" date="2016" name="Nucleic Acids Res.">
        <title>Hepatoma-derived growth factor-related protein 2 promotes DNA repair by homologous recombination.</title>
        <authorList>
            <person name="Baude A."/>
            <person name="Aaes T.L."/>
            <person name="Zhai B."/>
            <person name="Al-Nakouzi N."/>
            <person name="Oo H.Z."/>
            <person name="Daugaard M."/>
            <person name="Rohde M."/>
            <person name="Jaeaettelae M."/>
        </authorList>
    </citation>
    <scope>FUNCTION</scope>
    <scope>SUBCELLULAR LOCATION</scope>
    <scope>INTERACTION WITH HDGFL2</scope>
</reference>
<reference key="24">
    <citation type="submission" date="2007-07" db="PDB data bank">
        <title>Solution structure of the zinc finger domain of human KIAA0461.</title>
        <authorList>
            <consortium name="RIKEN structural genomics initiative (RSGI)"/>
        </authorList>
    </citation>
    <scope>STRUCTURE BY NMR OF 352-405</scope>
</reference>
<reference evidence="20" key="25">
    <citation type="journal article" date="2018" name="Proc. Natl. Acad. Sci. U.S.A.">
        <title>Affinity switching of the LEDGF/p75 IBD interactome is governed by kinase-dependent phosphorylation.</title>
        <authorList>
            <person name="Sharma S."/>
            <person name="Cermakova K."/>
            <person name="De Rijck J."/>
            <person name="Demeulemeester J."/>
            <person name="Fabry M."/>
            <person name="El Ashkar S."/>
            <person name="Van Belle S."/>
            <person name="Lepsik M."/>
            <person name="Tesina P."/>
            <person name="Duchoslav V."/>
            <person name="Novak P."/>
            <person name="Hubalek M."/>
            <person name="Srb P."/>
            <person name="Christ F."/>
            <person name="Rezacova P."/>
            <person name="Hodges H.C."/>
            <person name="Debyser Z."/>
            <person name="Veverka V."/>
        </authorList>
    </citation>
    <scope>STRUCTURE BY NMR OF 1370-1404 IN COMPLEX WITH PSIP1</scope>
    <scope>INTERACTION WITH PSIP1</scope>
    <scope>DOMAIN IBM MOTIF</scope>
    <scope>PHOSPHORYLATION AT SER-1373; SER-1374; THR-1378; SER-1392; THR-1394 AND SER-1396</scope>
    <scope>MUTAGENESIS OF SER-1392 AND SER-1396</scope>
</reference>
<reference key="26">
    <citation type="journal article" date="2015" name="J. Hum. Genet.">
        <title>A case of autism spectrum disorder arising from a de novo missense mutation in POGZ.</title>
        <authorList>
            <person name="Fukai R."/>
            <person name="Hiraki Y."/>
            <person name="Yofune H."/>
            <person name="Tsurusaki Y."/>
            <person name="Nakashima M."/>
            <person name="Saitsu H."/>
            <person name="Tanaka F."/>
            <person name="Miyake N."/>
            <person name="Matsumoto N."/>
        </authorList>
    </citation>
    <scope>VARIANT LYS-1040</scope>
    <scope>INVOLVEMENT IN AUTISM</scope>
</reference>
<organism>
    <name type="scientific">Homo sapiens</name>
    <name type="common">Human</name>
    <dbReference type="NCBI Taxonomy" id="9606"/>
    <lineage>
        <taxon>Eukaryota</taxon>
        <taxon>Metazoa</taxon>
        <taxon>Chordata</taxon>
        <taxon>Craniata</taxon>
        <taxon>Vertebrata</taxon>
        <taxon>Euteleostomi</taxon>
        <taxon>Mammalia</taxon>
        <taxon>Eutheria</taxon>
        <taxon>Euarchontoglires</taxon>
        <taxon>Primates</taxon>
        <taxon>Haplorrhini</taxon>
        <taxon>Catarrhini</taxon>
        <taxon>Hominidae</taxon>
        <taxon>Homo</taxon>
    </lineage>
</organism>